<gene>
    <name evidence="24" type="primary">Pla2g15</name>
    <name type="synonym">Lypla3</name>
</gene>
<name>PAG15_MOUSE</name>
<evidence type="ECO:0000250" key="1">
    <source>
        <dbReference type="UniProtKB" id="Q675A5"/>
    </source>
</evidence>
<evidence type="ECO:0000250" key="2">
    <source>
        <dbReference type="UniProtKB" id="Q8NCC3"/>
    </source>
</evidence>
<evidence type="ECO:0000250" key="3">
    <source>
        <dbReference type="UniProtKB" id="Q8WMP9"/>
    </source>
</evidence>
<evidence type="ECO:0000255" key="4"/>
<evidence type="ECO:0000269" key="5">
    <source>
    </source>
</evidence>
<evidence type="ECO:0000269" key="6">
    <source>
    </source>
</evidence>
<evidence type="ECO:0000269" key="7">
    <source>
    </source>
</evidence>
<evidence type="ECO:0000269" key="8">
    <source>
    </source>
</evidence>
<evidence type="ECO:0000269" key="9">
    <source>
    </source>
</evidence>
<evidence type="ECO:0000269" key="10">
    <source>
    </source>
</evidence>
<evidence type="ECO:0000269" key="11">
    <source>
    </source>
</evidence>
<evidence type="ECO:0000269" key="12">
    <source>
    </source>
</evidence>
<evidence type="ECO:0000269" key="13">
    <source>
    </source>
</evidence>
<evidence type="ECO:0000303" key="14">
    <source>
    </source>
</evidence>
<evidence type="ECO:0000303" key="15">
    <source>
    </source>
</evidence>
<evidence type="ECO:0000305" key="16"/>
<evidence type="ECO:0000305" key="17">
    <source>
    </source>
</evidence>
<evidence type="ECO:0000305" key="18">
    <source>
    </source>
</evidence>
<evidence type="ECO:0000305" key="19">
    <source>
    </source>
</evidence>
<evidence type="ECO:0000305" key="20">
    <source>
    </source>
</evidence>
<evidence type="ECO:0000305" key="21">
    <source>
    </source>
</evidence>
<evidence type="ECO:0000305" key="22">
    <source>
    </source>
</evidence>
<evidence type="ECO:0000305" key="23">
    <source>
    </source>
</evidence>
<evidence type="ECO:0000312" key="24">
    <source>
        <dbReference type="MGI" id="MGI:2178076"/>
    </source>
</evidence>
<sequence length="412" mass="47307">MDRHLCTCRETQLRSGLLLPLFLLMMLADLTLPAQRHPPVVLVPGDLGNQLEAKLDKPKVVHYLCSKKTDSYFTLWLNLELLLPVIIDCWIDNIRLVYNRTSRATQFPDGVDVRVPGFGETFSMEFLDPSKRNVGSYFYTMVESLVGWGYTRGEDVRGAPYDWRRAPNENGPYFLALREMIEEMYQMYGGPVVLVAHSMGNVYMLYFLQRQPQVWKDKYIHAFVSLGAPWGGVAKTLRVLASGDNNRIPVIGPLKIREQQRSAVSTSWLLPYNHTWSHEKVFVYTPTTNYTLRDYHRFFRDIGFEDGWFMRQDTEGLVEAMTPPGVELHCLYGTGVPTPNSFYYESFPDRDPKICFGDGDGTVNLESVLQCQAWQSRQEHRVSLQELPGSEHIEMLANATTLAYLKRVLLEP</sequence>
<keyword id="KW-0012">Acyltransferase</keyword>
<keyword id="KW-1015">Disulfide bond</keyword>
<keyword id="KW-0276">Fatty acid metabolism</keyword>
<keyword id="KW-0325">Glycoprotein</keyword>
<keyword id="KW-0378">Hydrolase</keyword>
<keyword id="KW-0443">Lipid metabolism</keyword>
<keyword id="KW-0458">Lysosome</keyword>
<keyword id="KW-0472">Membrane</keyword>
<keyword id="KW-0479">Metal-binding</keyword>
<keyword id="KW-1185">Reference proteome</keyword>
<keyword id="KW-0964">Secreted</keyword>
<keyword id="KW-0732">Signal</keyword>
<keyword id="KW-0808">Transferase</keyword>
<keyword id="KW-0862">Zinc</keyword>
<protein>
    <recommendedName>
        <fullName>Lysosomal phospholipase A and acyltransferase</fullName>
        <ecNumber evidence="5 7 8 9 11 12 13">2.3.1.-</ecNumber>
        <ecNumber evidence="8 13">3.1.1.32</ecNumber>
        <ecNumber evidence="8">3.1.1.4</ecNumber>
    </recommendedName>
    <alternativeName>
        <fullName evidence="14">1-O-acylceramide synthase</fullName>
        <shortName evidence="14">ACS</shortName>
    </alternativeName>
    <alternativeName>
        <fullName>LCAT-like lysophospholipase</fullName>
        <shortName evidence="14">LLPL</shortName>
        <ecNumber evidence="2">3.1.1.5</ecNumber>
    </alternativeName>
    <alternativeName>
        <fullName>Lysophospholipase 3</fullName>
    </alternativeName>
    <alternativeName>
        <fullName evidence="14 15">Lysosomal phospholipase A2</fullName>
        <shortName evidence="15">LPLA2</shortName>
    </alternativeName>
    <alternativeName>
        <fullName>Phospholipase A2 group XV</fullName>
    </alternativeName>
</protein>
<proteinExistence type="evidence at protein level"/>
<comment type="function">
    <text evidence="2 6 8 9 10 11 12 13">Has dual calcium-independent phospholipase and O-acyltransferase activities with a potential role in glycerophospholipid homeostasis and remodeling of acyl groups of lipophilic alcohols present in acidic cellular compartments (PubMed:11790796, PubMed:16106046, PubMed:16837646, PubMed:16880524, PubMed:17626977, PubMed:19017977, PubMed:20410020). Catalyzes hydrolysis of the ester bond of the fatty acyl group attached at sn-1 or sn-2 position of phospholipids (phospholipase A1 or A2 activity) and transfer it to the hydroxyl group at the first carbon of lipophilic alcohols (O-acyltransferase activity). Among preferred fatty acyl donors are phosphatidylcholines, phosphatidylethanolamines, phosphatidylglycerols and phosphatidylserines (PubMed:15294901, PubMed:20410020). Favors sn-2 over sn-1 deacylation of unsaturated fatty acyl groups of phosphatidylcholines, phosphatidylethanolamines, and phosphatidylglycerols (By similarity) (PubMed:16837646, PubMed:17626977). Among preferred fatty acyl acceptors are natural lipophilic alcohols including short-chain ceramide N-acetyl-sphingosine (C2 ceramide), alkylacylglycerols, monoacylglycerols, and acylethanolamides such as anandamide and oleoylethanolamide (PubMed:16837646, PubMed:17626977). Selectively hydrolyzes the sn-1 fatty acyl group of truncated oxidized phospholipids and may play a role in detoxification of reactive oxidized phospholipids during oxidative stress (PubMed:27993948). Required for normal phospholipid degradation in alveolar macrophages with potential implications in the clearance of pulmonary surfactant, which is mainly composed of dipalmitoylphosphatidylcholine (1,2-dihexadecanoyl-sn-glycero-3-phosphocholine) (PubMed:15294901, PubMed:16880524, PubMed:19017977). Involved in the first step of bis(monoacylglycero)phosphate (BMP) de novo synthesis from phosphatidylglycerol (1,2-diacyl-sn-glycero-3-phospho-(1'-sn-glycerol), PG) (By similarity). BMP is an important player in cargo sorting and degradation, regulation of cellular cholesterol levels and intercellular communication. At neutral pH, hydrolyzes the sn-1 fatty acyl group of the lysophosphatidylcholines (By similarity).</text>
</comment>
<comment type="catalytic activity">
    <reaction evidence="8 13 18 22">
        <text>a 1,2-diacyl-sn-glycero-3-phosphocholine + H2O = a 2-acyl-sn-glycero-3-phosphocholine + a fatty acid + H(+)</text>
        <dbReference type="Rhea" id="RHEA:18689"/>
        <dbReference type="ChEBI" id="CHEBI:15377"/>
        <dbReference type="ChEBI" id="CHEBI:15378"/>
        <dbReference type="ChEBI" id="CHEBI:28868"/>
        <dbReference type="ChEBI" id="CHEBI:57643"/>
        <dbReference type="ChEBI" id="CHEBI:57875"/>
        <dbReference type="EC" id="3.1.1.32"/>
    </reaction>
    <physiologicalReaction direction="left-to-right" evidence="18 20 22 23">
        <dbReference type="Rhea" id="RHEA:18690"/>
    </physiologicalReaction>
</comment>
<comment type="catalytic activity">
    <reaction evidence="8">
        <text>1-hexadecanoyl-2-(9Z-octadecenoyl)-sn-glycero-3-phosphocholine + H2O = 2-(9Z-octadecenoyl)-sn-glycero-3-phosphocholine + hexadecanoate + H(+)</text>
        <dbReference type="Rhea" id="RHEA:38783"/>
        <dbReference type="ChEBI" id="CHEBI:7896"/>
        <dbReference type="ChEBI" id="CHEBI:15377"/>
        <dbReference type="ChEBI" id="CHEBI:15378"/>
        <dbReference type="ChEBI" id="CHEBI:73001"/>
        <dbReference type="ChEBI" id="CHEBI:76071"/>
    </reaction>
    <physiologicalReaction direction="left-to-right" evidence="20">
        <dbReference type="Rhea" id="RHEA:38784"/>
    </physiologicalReaction>
</comment>
<comment type="catalytic activity">
    <reaction evidence="22">
        <text>1,2-di-(9Z-octadecenoyl)-sn-glycero-3-phosphocholine + H2O = 2-(9Z-octadecenoyl)-sn-glycero-3-phosphocholine + (9Z)-octadecenoate + H(+)</text>
        <dbReference type="Rhea" id="RHEA:56448"/>
        <dbReference type="ChEBI" id="CHEBI:15377"/>
        <dbReference type="ChEBI" id="CHEBI:15378"/>
        <dbReference type="ChEBI" id="CHEBI:30823"/>
        <dbReference type="ChEBI" id="CHEBI:74669"/>
        <dbReference type="ChEBI" id="CHEBI:76071"/>
    </reaction>
    <physiologicalReaction direction="left-to-right" evidence="22">
        <dbReference type="Rhea" id="RHEA:56449"/>
    </physiologicalReaction>
</comment>
<comment type="catalytic activity">
    <reaction evidence="13">
        <text>1-hexadecanoyl-2-glutaroyl-sn-glycero-3-phosphocholine + H2O = 2-glutaroyl-sn-glycero-3-phosphocholine + hexadecanoate + H(+)</text>
        <dbReference type="Rhea" id="RHEA:62480"/>
        <dbReference type="ChEBI" id="CHEBI:7896"/>
        <dbReference type="ChEBI" id="CHEBI:15377"/>
        <dbReference type="ChEBI" id="CHEBI:15378"/>
        <dbReference type="ChEBI" id="CHEBI:77756"/>
        <dbReference type="ChEBI" id="CHEBI:145781"/>
    </reaction>
    <physiologicalReaction direction="left-to-right" evidence="23">
        <dbReference type="Rhea" id="RHEA:62481"/>
    </physiologicalReaction>
</comment>
<comment type="catalytic activity">
    <reaction evidence="13">
        <text>1-hexadecanoyl-2-nonadioyl-sn-glycero-3-phosphocholine + H2O = 2-nonadioyl-sn-glycero-3-phosphocholine + hexadecanoate + H(+)</text>
        <dbReference type="Rhea" id="RHEA:62464"/>
        <dbReference type="ChEBI" id="CHEBI:7896"/>
        <dbReference type="ChEBI" id="CHEBI:15377"/>
        <dbReference type="ChEBI" id="CHEBI:15378"/>
        <dbReference type="ChEBI" id="CHEBI:78207"/>
        <dbReference type="ChEBI" id="CHEBI:145780"/>
    </reaction>
    <physiologicalReaction direction="left-to-right" evidence="23">
        <dbReference type="Rhea" id="RHEA:62465"/>
    </physiologicalReaction>
</comment>
<comment type="catalytic activity">
    <reaction evidence="13">
        <text>1-hexadecanoyl-2-(5-oxopentanoyl)-sn-glycero-3-phosphocholine + H2O = 2-(5-oxopentanoyl)-sn-glycero-3-phosphocholine + hexadecanoate + H(+)</text>
        <dbReference type="Rhea" id="RHEA:62484"/>
        <dbReference type="ChEBI" id="CHEBI:7896"/>
        <dbReference type="ChEBI" id="CHEBI:15377"/>
        <dbReference type="ChEBI" id="CHEBI:15378"/>
        <dbReference type="ChEBI" id="CHEBI:77890"/>
        <dbReference type="ChEBI" id="CHEBI:145782"/>
    </reaction>
    <physiologicalReaction direction="left-to-right" evidence="23">
        <dbReference type="Rhea" id="RHEA:62485"/>
    </physiologicalReaction>
</comment>
<comment type="catalytic activity">
    <reaction evidence="13">
        <text>1-hexadecanoyl-2-(9-oxononanoyl)-sn-glycero-3-phosphocholine + H2O = 2-(9-oxononanoyl)-sn-glycero-3-phosphocholine + hexadecanoate + H(+)</text>
        <dbReference type="Rhea" id="RHEA:62488"/>
        <dbReference type="ChEBI" id="CHEBI:7896"/>
        <dbReference type="ChEBI" id="CHEBI:15377"/>
        <dbReference type="ChEBI" id="CHEBI:15378"/>
        <dbReference type="ChEBI" id="CHEBI:61042"/>
        <dbReference type="ChEBI" id="CHEBI:145783"/>
    </reaction>
    <physiologicalReaction direction="left-to-right" evidence="23">
        <dbReference type="Rhea" id="RHEA:62489"/>
    </physiologicalReaction>
</comment>
<comment type="catalytic activity">
    <reaction evidence="1">
        <text>1,2-dihexadecanoyl-sn-glycero-3-phosphocholine + H2O = 2-hexadecanoyl-sn-glycero-3-phosphocholine + hexadecanoate + H(+)</text>
        <dbReference type="Rhea" id="RHEA:40487"/>
        <dbReference type="ChEBI" id="CHEBI:7896"/>
        <dbReference type="ChEBI" id="CHEBI:15377"/>
        <dbReference type="ChEBI" id="CHEBI:15378"/>
        <dbReference type="ChEBI" id="CHEBI:72999"/>
        <dbReference type="ChEBI" id="CHEBI:76078"/>
    </reaction>
    <physiologicalReaction direction="left-to-right" evidence="1">
        <dbReference type="Rhea" id="RHEA:40488"/>
    </physiologicalReaction>
</comment>
<comment type="catalytic activity">
    <reaction evidence="8 17 18 22">
        <text>a 1,2-diacyl-sn-glycero-3-phosphocholine + H2O = a 1-acyl-sn-glycero-3-phosphocholine + a fatty acid + H(+)</text>
        <dbReference type="Rhea" id="RHEA:15801"/>
        <dbReference type="ChEBI" id="CHEBI:15377"/>
        <dbReference type="ChEBI" id="CHEBI:15378"/>
        <dbReference type="ChEBI" id="CHEBI:28868"/>
        <dbReference type="ChEBI" id="CHEBI:57643"/>
        <dbReference type="ChEBI" id="CHEBI:58168"/>
        <dbReference type="EC" id="3.1.1.4"/>
    </reaction>
    <physiologicalReaction direction="left-to-right" evidence="17 18 20 22">
        <dbReference type="Rhea" id="RHEA:15802"/>
    </physiologicalReaction>
</comment>
<comment type="catalytic activity">
    <reaction evidence="8">
        <text>1-hexadecanoyl-2-(9Z-octadecenoyl)-sn-glycero-3-phosphocholine + H2O = 1-hexadecanoyl-sn-glycero-3-phosphocholine + (9Z)-octadecenoate + H(+)</text>
        <dbReference type="Rhea" id="RHEA:38779"/>
        <dbReference type="ChEBI" id="CHEBI:15377"/>
        <dbReference type="ChEBI" id="CHEBI:15378"/>
        <dbReference type="ChEBI" id="CHEBI:30823"/>
        <dbReference type="ChEBI" id="CHEBI:72998"/>
        <dbReference type="ChEBI" id="CHEBI:73001"/>
    </reaction>
    <physiologicalReaction direction="left-to-right" evidence="20">
        <dbReference type="Rhea" id="RHEA:38780"/>
    </physiologicalReaction>
</comment>
<comment type="catalytic activity">
    <reaction evidence="17 22">
        <text>1,2-di-(9Z-octadecenoyl)-sn-glycero-3-phosphocholine + H2O = 1-(9Z-octadecenoyl)-sn-glycero-3-phosphocholine + (9Z)-octadecenoate + H(+)</text>
        <dbReference type="Rhea" id="RHEA:40923"/>
        <dbReference type="ChEBI" id="CHEBI:15377"/>
        <dbReference type="ChEBI" id="CHEBI:15378"/>
        <dbReference type="ChEBI" id="CHEBI:28610"/>
        <dbReference type="ChEBI" id="CHEBI:30823"/>
        <dbReference type="ChEBI" id="CHEBI:74669"/>
    </reaction>
    <physiologicalReaction direction="left-to-right" evidence="17 22">
        <dbReference type="Rhea" id="RHEA:40924"/>
    </physiologicalReaction>
</comment>
<comment type="catalytic activity">
    <reaction evidence="1">
        <text>1,2-dihexadecanoyl-sn-glycero-3-phosphocholine + H2O = 1-hexadecanoyl-sn-glycero-3-phosphocholine + hexadecanoate + H(+)</text>
        <dbReference type="Rhea" id="RHEA:41223"/>
        <dbReference type="ChEBI" id="CHEBI:7896"/>
        <dbReference type="ChEBI" id="CHEBI:15377"/>
        <dbReference type="ChEBI" id="CHEBI:15378"/>
        <dbReference type="ChEBI" id="CHEBI:72998"/>
        <dbReference type="ChEBI" id="CHEBI:72999"/>
    </reaction>
    <physiologicalReaction direction="left-to-right" evidence="1">
        <dbReference type="Rhea" id="RHEA:41224"/>
    </physiologicalReaction>
</comment>
<comment type="catalytic activity">
    <reaction evidence="2">
        <text>a 1-acyl-sn-glycero-3-phosphocholine + H2O = sn-glycerol 3-phosphocholine + a fatty acid + H(+)</text>
        <dbReference type="Rhea" id="RHEA:15177"/>
        <dbReference type="ChEBI" id="CHEBI:15377"/>
        <dbReference type="ChEBI" id="CHEBI:15378"/>
        <dbReference type="ChEBI" id="CHEBI:16870"/>
        <dbReference type="ChEBI" id="CHEBI:28868"/>
        <dbReference type="ChEBI" id="CHEBI:58168"/>
        <dbReference type="EC" id="3.1.1.5"/>
    </reaction>
    <physiologicalReaction direction="left-to-right" evidence="2">
        <dbReference type="Rhea" id="RHEA:15178"/>
    </physiologicalReaction>
</comment>
<comment type="catalytic activity">
    <reaction evidence="2">
        <text>1-hexadecanoyl-sn-glycero-3-phosphocholine + H2O = sn-glycerol 3-phosphocholine + hexadecanoate + H(+)</text>
        <dbReference type="Rhea" id="RHEA:40435"/>
        <dbReference type="ChEBI" id="CHEBI:7896"/>
        <dbReference type="ChEBI" id="CHEBI:15377"/>
        <dbReference type="ChEBI" id="CHEBI:15378"/>
        <dbReference type="ChEBI" id="CHEBI:16870"/>
        <dbReference type="ChEBI" id="CHEBI:72998"/>
    </reaction>
    <physiologicalReaction direction="left-to-right" evidence="2">
        <dbReference type="Rhea" id="RHEA:40436"/>
    </physiologicalReaction>
</comment>
<comment type="catalytic activity">
    <reaction evidence="8">
        <text>N-(acetyl)-sphing-4-enine + a 1,2-diacyl-sn-glycero-3-phosphoethanolamine = 1-O-acyl-N-(acetyl)-sphing-4-enine + a 2-acyl-sn-glycero-3-phosphoethanolamine</text>
        <dbReference type="Rhea" id="RHEA:44536"/>
        <dbReference type="ChEBI" id="CHEBI:46979"/>
        <dbReference type="ChEBI" id="CHEBI:64612"/>
        <dbReference type="ChEBI" id="CHEBI:65213"/>
        <dbReference type="ChEBI" id="CHEBI:84483"/>
    </reaction>
    <physiologicalReaction direction="left-to-right" evidence="20">
        <dbReference type="Rhea" id="RHEA:44537"/>
    </physiologicalReaction>
</comment>
<comment type="catalytic activity">
    <reaction evidence="8">
        <text>1-hexadecanoyl-2-(9Z-octadecenoyl)-sn-glycero-3-phosphoethanolamine + N-(acetyl)-sphing-4-enine = 2-(9Z-octadecenoyl)-sn-glycero-3-phosphoethanolamine + 1-hexadecanoyl-N-(acetyl)-sphing-4-enine</text>
        <dbReference type="Rhea" id="RHEA:38827"/>
        <dbReference type="ChEBI" id="CHEBI:46979"/>
        <dbReference type="ChEBI" id="CHEBI:73007"/>
        <dbReference type="ChEBI" id="CHEBI:76077"/>
        <dbReference type="ChEBI" id="CHEBI:76088"/>
    </reaction>
    <physiologicalReaction direction="left-to-right" evidence="20">
        <dbReference type="Rhea" id="RHEA:38828"/>
    </physiologicalReaction>
</comment>
<comment type="catalytic activity">
    <reaction evidence="8">
        <text>1-hexadecanoyl-2-(9Z,12Z-octadecadienoyl)-sn-glycero-3-phosphoethanolamine + N-(acetyl)-sphing-4-enine = 2-(9Z,12Z)-octadecadienoyl-sn-glycero-3-phosphoethanolamine + 1-hexadecanoyl-N-(acetyl)-sphing-4-enine</text>
        <dbReference type="Rhea" id="RHEA:38831"/>
        <dbReference type="ChEBI" id="CHEBI:46979"/>
        <dbReference type="ChEBI" id="CHEBI:73008"/>
        <dbReference type="ChEBI" id="CHEBI:76077"/>
        <dbReference type="ChEBI" id="CHEBI:76090"/>
    </reaction>
    <physiologicalReaction direction="left-to-right" evidence="20">
        <dbReference type="Rhea" id="RHEA:38832"/>
    </physiologicalReaction>
</comment>
<comment type="catalytic activity">
    <reaction evidence="8">
        <text>1-hexadecanoyl-2-(5Z,8Z,11Z,14Z-eicosatetraenoyl)-sn-glycero-3-phosphoethanolamine + N-(acetyl)-sphing-4-enine = 2-(5Z,8Z,11Z,14Z)-eicosatetraenoyl-sn-glycero-3-phosphoethanolamine + 1-hexadecanoyl-N-(acetyl)-sphing-4-enine</text>
        <dbReference type="Rhea" id="RHEA:38843"/>
        <dbReference type="ChEBI" id="CHEBI:46979"/>
        <dbReference type="ChEBI" id="CHEBI:73009"/>
        <dbReference type="ChEBI" id="CHEBI:76077"/>
        <dbReference type="ChEBI" id="CHEBI:76091"/>
    </reaction>
    <physiologicalReaction direction="left-to-right" evidence="20">
        <dbReference type="Rhea" id="RHEA:38844"/>
    </physiologicalReaction>
</comment>
<comment type="catalytic activity">
    <reaction evidence="8">
        <text>N-(acetyl)-sphing-4-enine + a 1,2-diacyl-sn-glycero-3-phosphoethanolamine = 1-O-acyl-N-(acetyl)-sphing-4-enine + a 1-acyl-sn-glycero-3-phosphoethanolamine</text>
        <dbReference type="Rhea" id="RHEA:44532"/>
        <dbReference type="ChEBI" id="CHEBI:46979"/>
        <dbReference type="ChEBI" id="CHEBI:64381"/>
        <dbReference type="ChEBI" id="CHEBI:64612"/>
        <dbReference type="ChEBI" id="CHEBI:84483"/>
    </reaction>
    <physiologicalReaction direction="left-to-right" evidence="20">
        <dbReference type="Rhea" id="RHEA:44533"/>
    </physiologicalReaction>
</comment>
<comment type="catalytic activity">
    <reaction evidence="8">
        <text>1-hexadecanoyl-2-(9Z-octadecenoyl)-sn-glycero-3-phosphoethanolamine + N-(acetyl)-sphing-4-enine = 1-(9Z-octadecenoyl)-N-(acetyl)-sphing-4-enine + 1-hexadecanoyl-sn-glycero-3-phosphoethanolamine</text>
        <dbReference type="Rhea" id="RHEA:38823"/>
        <dbReference type="ChEBI" id="CHEBI:46979"/>
        <dbReference type="ChEBI" id="CHEBI:73004"/>
        <dbReference type="ChEBI" id="CHEBI:73007"/>
        <dbReference type="ChEBI" id="CHEBI:76054"/>
    </reaction>
    <physiologicalReaction direction="left-to-right" evidence="20">
        <dbReference type="Rhea" id="RHEA:38824"/>
    </physiologicalReaction>
</comment>
<comment type="catalytic activity">
    <reaction evidence="8">
        <text>1-hexadecanoyl-2-(9Z,12Z-octadecadienoyl)-sn-glycero-3-phosphoethanolamine + N-(acetyl)-sphing-4-enine = 1-(9Z,12Z-octadecadienoyl)-N-acetylsphing-4-enine + 1-hexadecanoyl-sn-glycero-3-phosphoethanolamine</text>
        <dbReference type="Rhea" id="RHEA:38835"/>
        <dbReference type="ChEBI" id="CHEBI:46979"/>
        <dbReference type="ChEBI" id="CHEBI:73004"/>
        <dbReference type="ChEBI" id="CHEBI:73008"/>
        <dbReference type="ChEBI" id="CHEBI:76086"/>
    </reaction>
    <physiologicalReaction direction="left-to-right" evidence="20">
        <dbReference type="Rhea" id="RHEA:38836"/>
    </physiologicalReaction>
</comment>
<comment type="catalytic activity">
    <reaction evidence="8">
        <text>1-hexadecanoyl-2-(5Z,8Z,11Z,14Z-eicosatetraenoyl)-sn-glycero-3-phosphoethanolamine + N-(acetyl)-sphing-4-enine = 1-(5Z,8Z,11Z,14Z)-eicosatetraenoyl-N-(acetyl)-sphing-4-enine + 1-hexadecanoyl-sn-glycero-3-phosphoethanolamine</text>
        <dbReference type="Rhea" id="RHEA:38839"/>
        <dbReference type="ChEBI" id="CHEBI:46979"/>
        <dbReference type="ChEBI" id="CHEBI:73004"/>
        <dbReference type="ChEBI" id="CHEBI:73009"/>
        <dbReference type="ChEBI" id="CHEBI:76080"/>
    </reaction>
    <physiologicalReaction direction="left-to-right" evidence="20">
        <dbReference type="Rhea" id="RHEA:38840"/>
    </physiologicalReaction>
</comment>
<comment type="catalytic activity">
    <reaction evidence="8 18">
        <text>N-(acetyl)-sphing-4-enine + a 1,2-diacyl-sn-glycero-3-phosphocholine = 1-O-acyl-N-(acetyl)-sphing-4-enine + a 2-acyl-sn-glycero-3-phosphocholine</text>
        <dbReference type="Rhea" id="RHEA:44512"/>
        <dbReference type="ChEBI" id="CHEBI:46979"/>
        <dbReference type="ChEBI" id="CHEBI:57643"/>
        <dbReference type="ChEBI" id="CHEBI:57875"/>
        <dbReference type="ChEBI" id="CHEBI:84483"/>
    </reaction>
    <physiologicalReaction direction="left-to-right" evidence="18 20">
        <dbReference type="Rhea" id="RHEA:44513"/>
    </physiologicalReaction>
</comment>
<comment type="catalytic activity">
    <reaction evidence="8">
        <text>1-hexadecanoyl-2-(9Z-octadecenoyl)-sn-glycero-3-phosphocholine + N-(acetyl)-sphing-4-enine = 1-hexadecanoyl-N-(acetyl)-sphing-4-enine + 2-(9Z-octadecenoyl)-sn-glycero-3-phosphocholine</text>
        <dbReference type="Rhea" id="RHEA:38759"/>
        <dbReference type="ChEBI" id="CHEBI:46979"/>
        <dbReference type="ChEBI" id="CHEBI:73001"/>
        <dbReference type="ChEBI" id="CHEBI:76071"/>
        <dbReference type="ChEBI" id="CHEBI:76077"/>
    </reaction>
    <physiologicalReaction direction="left-to-right" evidence="20">
        <dbReference type="Rhea" id="RHEA:38760"/>
    </physiologicalReaction>
</comment>
<comment type="catalytic activity">
    <reaction evidence="8">
        <text>1-hexadecanoyl-2-(9Z,12Z-octadecadienoyl)-sn-glycero-3-phosphocholine + N-(acetyl)-sphing-4-enine = 2-(9Z,12Z-octadecadienoyl)-sn-glycero-3-phosphocholine + 1-hexadecanoyl-N-(acetyl)-sphing-4-enine</text>
        <dbReference type="Rhea" id="RHEA:38811"/>
        <dbReference type="ChEBI" id="CHEBI:46979"/>
        <dbReference type="ChEBI" id="CHEBI:73002"/>
        <dbReference type="ChEBI" id="CHEBI:76077"/>
        <dbReference type="ChEBI" id="CHEBI:76084"/>
    </reaction>
    <physiologicalReaction direction="left-to-right" evidence="20">
        <dbReference type="Rhea" id="RHEA:38812"/>
    </physiologicalReaction>
</comment>
<comment type="catalytic activity">
    <reaction evidence="8">
        <text>1-hexadecanoyl-2-(5Z,8Z,11Z,14Z-eicosatetraenoyl)-sn-glycero-3-phosphocholine + N-(acetyl)-sphing-4-enine = 1-hexadecanoyl-N-(acetyl)-sphing-4-enine + 2-(5Z,8Z,11Z,14Z)-eicosatetraenoyl-sn-glycero-3-phosphocholine</text>
        <dbReference type="Rhea" id="RHEA:38775"/>
        <dbReference type="ChEBI" id="CHEBI:46979"/>
        <dbReference type="ChEBI" id="CHEBI:73003"/>
        <dbReference type="ChEBI" id="CHEBI:76077"/>
        <dbReference type="ChEBI" id="CHEBI:76079"/>
    </reaction>
    <physiologicalReaction direction="left-to-right" evidence="20">
        <dbReference type="Rhea" id="RHEA:38776"/>
    </physiologicalReaction>
</comment>
<comment type="catalytic activity">
    <reaction evidence="8">
        <text>1-hexadecanoyl-2-(4Z,7Z,10Z,13Z,16Z,19Z-docosahexaenoyl)-sn-glycero-3-phosphocholine + N-(acetyl)-sphing-4-enine = 2-(4Z,7Z,10Z,13Z,16Z,19Z-docosahexaenoyl)-sn-glycero-3-phosphocholine + 1-hexadecanoyl-N-(acetyl)-sphing-4-enine</text>
        <dbReference type="Rhea" id="RHEA:38815"/>
        <dbReference type="ChEBI" id="CHEBI:46979"/>
        <dbReference type="ChEBI" id="CHEBI:74963"/>
        <dbReference type="ChEBI" id="CHEBI:76077"/>
        <dbReference type="ChEBI" id="CHEBI:76085"/>
    </reaction>
    <physiologicalReaction direction="left-to-right" evidence="20">
        <dbReference type="Rhea" id="RHEA:38816"/>
    </physiologicalReaction>
</comment>
<comment type="catalytic activity">
    <reaction evidence="13">
        <text>1-hexadecanoyl-2-nonadioyl-sn-glycero-3-phosphocholine + N-(acetyl)-sphing-4-enine = 2-nonadioyl-sn-glycero-3-phosphocholine + 1-hexadecanoyl-N-(acetyl)-sphing-4-enine</text>
        <dbReference type="Rhea" id="RHEA:62472"/>
        <dbReference type="ChEBI" id="CHEBI:46979"/>
        <dbReference type="ChEBI" id="CHEBI:76077"/>
        <dbReference type="ChEBI" id="CHEBI:78207"/>
        <dbReference type="ChEBI" id="CHEBI:145780"/>
    </reaction>
    <physiologicalReaction direction="left-to-right" evidence="23">
        <dbReference type="Rhea" id="RHEA:62473"/>
    </physiologicalReaction>
</comment>
<comment type="catalytic activity">
    <reaction evidence="8">
        <text>1-octadecanoyl-2-(9Z-octadecenoyl)-sn-glycero-3-phosphocholine + N-(acetyl)-sphing-4-enine = 1-octadecanoyl-N-(acetyl)-sphing-4-enine + 2-(9Z-octadecenoyl)-sn-glycero-3-phosphocholine</text>
        <dbReference type="Rhea" id="RHEA:38799"/>
        <dbReference type="ChEBI" id="CHEBI:46979"/>
        <dbReference type="ChEBI" id="CHEBI:75034"/>
        <dbReference type="ChEBI" id="CHEBI:76071"/>
        <dbReference type="ChEBI" id="CHEBI:76074"/>
    </reaction>
    <physiologicalReaction direction="left-to-right" evidence="20">
        <dbReference type="Rhea" id="RHEA:38800"/>
    </physiologicalReaction>
</comment>
<comment type="catalytic activity">
    <reaction evidence="8">
        <text>1-(9Z)-octadecenoyl-2-octadecanoyl-sn-glycero-3-phosphocholine + N-(acetyl)-sphing-4-enine = 2-octadecanoyl-sn-glycero-3-phosphocholine + 1-(9Z-octadecenoyl)-N-(acetyl)-sphing-4-enine</text>
        <dbReference type="Rhea" id="RHEA:38791"/>
        <dbReference type="ChEBI" id="CHEBI:46979"/>
        <dbReference type="ChEBI" id="CHEBI:76054"/>
        <dbReference type="ChEBI" id="CHEBI:76073"/>
        <dbReference type="ChEBI" id="CHEBI:76076"/>
    </reaction>
    <physiologicalReaction direction="left-to-right" evidence="20">
        <dbReference type="Rhea" id="RHEA:38792"/>
    </physiologicalReaction>
</comment>
<comment type="catalytic activity">
    <reaction evidence="2">
        <text>1-octadecanoyl-2-(5Z,8Z,11Z,14Z-eicosatetraenoyl)-sn-glycero-3-phosphocholine + N-(acetyl)-sphing-4-enine = 1-octadecanoyl-N-(acetyl)-sphing-4-enine + 2-(5Z,8Z,11Z,14Z)-eicosatetraenoyl-sn-glycero-3-phosphocholine</text>
        <dbReference type="Rhea" id="RHEA:57120"/>
        <dbReference type="ChEBI" id="CHEBI:46979"/>
        <dbReference type="ChEBI" id="CHEBI:74965"/>
        <dbReference type="ChEBI" id="CHEBI:76074"/>
        <dbReference type="ChEBI" id="CHEBI:76079"/>
    </reaction>
    <physiologicalReaction direction="left-to-right" evidence="2">
        <dbReference type="Rhea" id="RHEA:57121"/>
    </physiologicalReaction>
</comment>
<comment type="catalytic activity">
    <reaction evidence="8">
        <text>1-(9Z-octadecenoyl)-2-hexadecanoyl-sn-glycero-3-phosphocholine + N-(acetyl)-sphing-4-enine = 1-(9Z-octadecenoyl)-N-(acetyl)-sphing-4-enine + 2-hexadecanoyl-sn-glycero-3-phosphocholine</text>
        <dbReference type="Rhea" id="RHEA:38767"/>
        <dbReference type="ChEBI" id="CHEBI:46979"/>
        <dbReference type="ChEBI" id="CHEBI:74667"/>
        <dbReference type="ChEBI" id="CHEBI:76054"/>
        <dbReference type="ChEBI" id="CHEBI:76078"/>
    </reaction>
    <physiologicalReaction direction="left-to-right" evidence="20">
        <dbReference type="Rhea" id="RHEA:38768"/>
    </physiologicalReaction>
</comment>
<comment type="catalytic activity">
    <reaction evidence="7 8 9 10 11 12 13 17 18">
        <text>N-(acetyl)-sphing-4-enine + a 1,2-diacyl-sn-glycero-3-phosphocholine = 1-O-acyl-N-(acetyl)-sphing-4-enine + a 1-acyl-sn-glycero-3-phosphocholine</text>
        <dbReference type="Rhea" id="RHEA:44508"/>
        <dbReference type="ChEBI" id="CHEBI:46979"/>
        <dbReference type="ChEBI" id="CHEBI:57643"/>
        <dbReference type="ChEBI" id="CHEBI:58168"/>
        <dbReference type="ChEBI" id="CHEBI:84483"/>
    </reaction>
    <physiologicalReaction direction="left-to-right" evidence="17 18 20 21 22">
        <dbReference type="Rhea" id="RHEA:44509"/>
    </physiologicalReaction>
</comment>
<comment type="catalytic activity">
    <reaction evidence="8 9">
        <text>1-hexadecanoyl-2-(9Z-octadecenoyl)-sn-glycero-3-phosphocholine + N-(acetyl)-sphing-4-enine = 1-(9Z-octadecenoyl)-N-(acetyl)-sphing-4-enine + 1-hexadecanoyl-sn-glycero-3-phosphocholine</text>
        <dbReference type="Rhea" id="RHEA:38755"/>
        <dbReference type="ChEBI" id="CHEBI:46979"/>
        <dbReference type="ChEBI" id="CHEBI:72998"/>
        <dbReference type="ChEBI" id="CHEBI:73001"/>
        <dbReference type="ChEBI" id="CHEBI:76054"/>
    </reaction>
    <physiologicalReaction direction="left-to-right" evidence="20 21">
        <dbReference type="Rhea" id="RHEA:38756"/>
    </physiologicalReaction>
</comment>
<comment type="catalytic activity">
    <reaction evidence="8">
        <text>1-hexadecanoyl-2-(9Z,12Z-octadecadienoyl)-sn-glycero-3-phosphocholine + N-(acetyl)-sphing-4-enine = 1-(9Z,12Z-octadecadienoyl)-N-acetylsphing-4-enine + 1-hexadecanoyl-sn-glycero-3-phosphocholine</text>
        <dbReference type="Rhea" id="RHEA:38807"/>
        <dbReference type="ChEBI" id="CHEBI:46979"/>
        <dbReference type="ChEBI" id="CHEBI:72998"/>
        <dbReference type="ChEBI" id="CHEBI:73002"/>
        <dbReference type="ChEBI" id="CHEBI:76086"/>
    </reaction>
    <physiologicalReaction direction="left-to-right" evidence="20">
        <dbReference type="Rhea" id="RHEA:38808"/>
    </physiologicalReaction>
</comment>
<comment type="catalytic activity">
    <reaction evidence="8">
        <text>1-hexadecanoyl-2-(5Z,8Z,11Z,14Z-eicosatetraenoyl)-sn-glycero-3-phosphocholine + N-(acetyl)-sphing-4-enine = 1-(5Z,8Z,11Z,14Z)-eicosatetraenoyl-N-(acetyl)-sphing-4-enine + 1-hexadecanoyl-sn-glycero-3-phosphocholine</text>
        <dbReference type="Rhea" id="RHEA:38771"/>
        <dbReference type="ChEBI" id="CHEBI:46979"/>
        <dbReference type="ChEBI" id="CHEBI:72998"/>
        <dbReference type="ChEBI" id="CHEBI:73003"/>
        <dbReference type="ChEBI" id="CHEBI:76080"/>
    </reaction>
    <physiologicalReaction direction="left-to-right" evidence="20">
        <dbReference type="Rhea" id="RHEA:38772"/>
    </physiologicalReaction>
</comment>
<comment type="catalytic activity">
    <reaction evidence="8">
        <text>1-hexadecanoyl-2-(4Z,7Z,10Z,13Z,16Z,19Z-docosahexaenoyl)-sn-glycero-3-phosphocholine + N-(acetyl)-sphing-4-enine = 1-(4Z,7Z,10Z,13Z,16Z,19Z-docosahexaenoyl)-N-(acetyl)-sphing-4-enine + 1-hexadecanoyl-sn-glycero-3-phosphocholine</text>
        <dbReference type="Rhea" id="RHEA:38819"/>
        <dbReference type="ChEBI" id="CHEBI:46979"/>
        <dbReference type="ChEBI" id="CHEBI:72998"/>
        <dbReference type="ChEBI" id="CHEBI:74963"/>
        <dbReference type="ChEBI" id="CHEBI:76087"/>
    </reaction>
    <physiologicalReaction direction="left-to-right" evidence="20">
        <dbReference type="Rhea" id="RHEA:38820"/>
    </physiologicalReaction>
</comment>
<comment type="catalytic activity">
    <reaction evidence="8">
        <text>1-octadecanoyl-2-(9Z-octadecenoyl)-sn-glycero-3-phosphocholine + N-(acetyl)-sphing-4-enine = 1-(9Z-octadecenoyl)-N-(acetyl)-sphing-4-enine + 1-octadecanoyl-sn-glycero-3-phosphocholine</text>
        <dbReference type="Rhea" id="RHEA:38795"/>
        <dbReference type="ChEBI" id="CHEBI:46979"/>
        <dbReference type="ChEBI" id="CHEBI:73858"/>
        <dbReference type="ChEBI" id="CHEBI:75034"/>
        <dbReference type="ChEBI" id="CHEBI:76054"/>
    </reaction>
    <physiologicalReaction direction="left-to-right" evidence="20">
        <dbReference type="Rhea" id="RHEA:38796"/>
    </physiologicalReaction>
</comment>
<comment type="catalytic activity">
    <reaction evidence="2">
        <text>1-octadecanoyl-2-(9Z,12Z)-octadecadienoyl-sn-glycero-3-phosphocholine + N-(acetyl)-sphing-4-enine = 1-(9Z,12Z-octadecadienoyl)-N-acetylsphing-4-enine + 1-octadecanoyl-sn-glycero-3-phosphocholine</text>
        <dbReference type="Rhea" id="RHEA:57108"/>
        <dbReference type="ChEBI" id="CHEBI:46979"/>
        <dbReference type="ChEBI" id="CHEBI:73858"/>
        <dbReference type="ChEBI" id="CHEBI:76086"/>
        <dbReference type="ChEBI" id="CHEBI:84822"/>
    </reaction>
    <physiologicalReaction direction="left-to-right" evidence="2">
        <dbReference type="Rhea" id="RHEA:57109"/>
    </physiologicalReaction>
</comment>
<comment type="catalytic activity">
    <reaction evidence="8">
        <text>1-(9Z-octadecenoyl)-2-hexadecanoyl-sn-glycero-3-phosphocholine + N-(acetyl)-sphing-4-enine = 1-hexadecanoyl-N-(acetyl)-sphing-4-enine + 1-(9Z-octadecenoyl)-sn-glycero-3-phosphocholine</text>
        <dbReference type="Rhea" id="RHEA:38763"/>
        <dbReference type="ChEBI" id="CHEBI:28610"/>
        <dbReference type="ChEBI" id="CHEBI:46979"/>
        <dbReference type="ChEBI" id="CHEBI:74667"/>
        <dbReference type="ChEBI" id="CHEBI:76077"/>
    </reaction>
    <physiologicalReaction direction="left-to-right" evidence="20">
        <dbReference type="Rhea" id="RHEA:38764"/>
    </physiologicalReaction>
</comment>
<comment type="catalytic activity">
    <reaction evidence="8">
        <text>1-(9Z)-octadecenoyl-2-octadecanoyl-sn-glycero-3-phosphocholine + N-(acetyl)-sphing-4-enine = 1-octadecanoyl-N-(acetyl)-sphing-4-enine + 1-(9Z-octadecenoyl)-sn-glycero-3-phosphocholine</text>
        <dbReference type="Rhea" id="RHEA:38803"/>
        <dbReference type="ChEBI" id="CHEBI:28610"/>
        <dbReference type="ChEBI" id="CHEBI:46979"/>
        <dbReference type="ChEBI" id="CHEBI:76073"/>
        <dbReference type="ChEBI" id="CHEBI:76074"/>
    </reaction>
    <physiologicalReaction direction="left-to-right" evidence="20">
        <dbReference type="Rhea" id="RHEA:38804"/>
    </physiologicalReaction>
</comment>
<comment type="catalytic activity">
    <reaction evidence="7 9 10 11 12 13 17">
        <text>1,2-di-(9Z-octadecenoyl)-sn-glycero-3-phosphocholine + N-(acetyl)-sphing-4-enine = 1-(9Z-octadecenoyl)-N-(acetyl)-sphing-4-enine + 1-(9Z-octadecenoyl)-sn-glycero-3-phosphocholine</text>
        <dbReference type="Rhea" id="RHEA:38703"/>
        <dbReference type="ChEBI" id="CHEBI:28610"/>
        <dbReference type="ChEBI" id="CHEBI:46979"/>
        <dbReference type="ChEBI" id="CHEBI:74669"/>
        <dbReference type="ChEBI" id="CHEBI:76054"/>
    </reaction>
    <physiologicalReaction direction="left-to-right" evidence="17 22">
        <dbReference type="Rhea" id="RHEA:38704"/>
    </physiologicalReaction>
</comment>
<comment type="catalytic activity">
    <reaction evidence="2">
        <text>1-octadecanoyl-2-(5Z,8Z,11Z,14Z-eicosatetraenoyl)-sn-glycero-3-phosphocholine + N-(acetyl)-sphing-4-enine = 1-(5Z,8Z,11Z,14Z)-eicosatetraenoyl-N-(acetyl)-sphing-4-enine + 1-octadecanoyl-sn-glycero-3-phosphocholine</text>
        <dbReference type="Rhea" id="RHEA:57116"/>
        <dbReference type="ChEBI" id="CHEBI:46979"/>
        <dbReference type="ChEBI" id="CHEBI:73858"/>
        <dbReference type="ChEBI" id="CHEBI:74965"/>
        <dbReference type="ChEBI" id="CHEBI:76080"/>
    </reaction>
    <physiologicalReaction direction="left-to-right" evidence="2">
        <dbReference type="Rhea" id="RHEA:57117"/>
    </physiologicalReaction>
</comment>
<comment type="catalytic activity">
    <reaction evidence="2">
        <text>a 1,2-diacyl-sn-glycero-3-phospho-L-serine + N-(acetyl)-sphing-4-enine = a 2-acyl-sn-glycero-3-phospho-L-serine + 1-O-acyl-N-(acetyl)-sphing-4-enine</text>
        <dbReference type="Rhea" id="RHEA:78355"/>
        <dbReference type="ChEBI" id="CHEBI:46979"/>
        <dbReference type="ChEBI" id="CHEBI:57262"/>
        <dbReference type="ChEBI" id="CHEBI:65214"/>
        <dbReference type="ChEBI" id="CHEBI:84483"/>
    </reaction>
    <physiologicalReaction direction="left-to-right" evidence="2">
        <dbReference type="Rhea" id="RHEA:78356"/>
    </physiologicalReaction>
</comment>
<comment type="catalytic activity">
    <reaction evidence="2">
        <text>1-octadecanoyl-2-(9Z-octadecenoyl)-sn-glycero-3-phospho-L-serine + N-(acetyl)-sphing-4-enine = 2-(9Z-octadecenoyl)-sn-glycero-3-phospho-L-serine + 1-octadecanoyl-N-(acetyl)-sphing-4-enine</text>
        <dbReference type="Rhea" id="RHEA:57140"/>
        <dbReference type="ChEBI" id="CHEBI:46979"/>
        <dbReference type="ChEBI" id="CHEBI:76074"/>
        <dbReference type="ChEBI" id="CHEBI:77342"/>
        <dbReference type="ChEBI" id="CHEBI:78260"/>
    </reaction>
    <physiologicalReaction direction="left-to-right" evidence="2">
        <dbReference type="Rhea" id="RHEA:57141"/>
    </physiologicalReaction>
</comment>
<comment type="catalytic activity">
    <reaction evidence="2">
        <text>a 1,2-diacyl-sn-glycero-3-phospho-L-serine + N-(acetyl)-sphing-4-enine = 1-O-acyl-N-(acetyl)-sphing-4-enine + a 1-acyl-sn-glycero-3-phospho-L-serine</text>
        <dbReference type="Rhea" id="RHEA:78351"/>
        <dbReference type="ChEBI" id="CHEBI:46979"/>
        <dbReference type="ChEBI" id="CHEBI:57262"/>
        <dbReference type="ChEBI" id="CHEBI:64379"/>
        <dbReference type="ChEBI" id="CHEBI:84483"/>
    </reaction>
    <physiologicalReaction direction="left-to-right" evidence="2">
        <dbReference type="Rhea" id="RHEA:78352"/>
    </physiologicalReaction>
</comment>
<comment type="catalytic activity">
    <reaction evidence="2">
        <text>1-octadecanoyl-2-(9Z-octadecenoyl)-sn-glycero-3-phospho-L-serine + N-(acetyl)-sphing-4-enine = 1-octadecanoyl-sn-glycero-3-phosphoserine + 1-(9Z-octadecenoyl)-N-(acetyl)-sphing-4-enine</text>
        <dbReference type="Rhea" id="RHEA:57136"/>
        <dbReference type="ChEBI" id="CHEBI:46979"/>
        <dbReference type="ChEBI" id="CHEBI:76054"/>
        <dbReference type="ChEBI" id="CHEBI:78260"/>
        <dbReference type="ChEBI" id="CHEBI:84467"/>
    </reaction>
    <physiologicalReaction direction="left-to-right" evidence="2">
        <dbReference type="Rhea" id="RHEA:57137"/>
    </physiologicalReaction>
</comment>
<comment type="catalytic activity">
    <reaction evidence="2">
        <text>a 1,2-diacyl-sn-glycero-3-phospho-(1'-sn-glycerol) + N-(acetyl)-sphing-4-enine = 2-acyl-sn-glycero-3-phospho-(1'-sn-glycerol) + 1-O-acyl-N-(acetyl)-sphing-4-enine</text>
        <dbReference type="Rhea" id="RHEA:78359"/>
        <dbReference type="ChEBI" id="CHEBI:46979"/>
        <dbReference type="ChEBI" id="CHEBI:64716"/>
        <dbReference type="ChEBI" id="CHEBI:76528"/>
        <dbReference type="ChEBI" id="CHEBI:84483"/>
    </reaction>
    <physiologicalReaction direction="left-to-right" evidence="2">
        <dbReference type="Rhea" id="RHEA:78360"/>
    </physiologicalReaction>
</comment>
<comment type="catalytic activity">
    <reaction evidence="2">
        <text>1-octadecanoyl-2-(9Z-octadecenoyl)-sn-glycero-3-phospho-(1'-sn-glycerol) + N-(acetyl)-sphing-4-enine = 2-(9Z-octadecenoyl)-sn-glycero-3-phospho-(1'-sn-glycerol) + 1-octadecanoyl-N-(acetyl)-sphing-4-enine</text>
        <dbReference type="Rhea" id="RHEA:57144"/>
        <dbReference type="ChEBI" id="CHEBI:46979"/>
        <dbReference type="ChEBI" id="CHEBI:72845"/>
        <dbReference type="ChEBI" id="CHEBI:76074"/>
        <dbReference type="ChEBI" id="CHEBI:141490"/>
    </reaction>
    <physiologicalReaction direction="left-to-right" evidence="2">
        <dbReference type="Rhea" id="RHEA:57145"/>
    </physiologicalReaction>
</comment>
<comment type="catalytic activity">
    <reaction evidence="2">
        <text>a 1,2-diacyl-sn-glycero-3-phospho-(1'-sn-glycerol) + N-(acetyl)-sphing-4-enine = 1-O-acyl-N-(acetyl)-sphing-4-enine + 1-acyl-sn-glycero-3-phospho-(1'-sn-glycerol)</text>
        <dbReference type="Rhea" id="RHEA:78363"/>
        <dbReference type="ChEBI" id="CHEBI:46979"/>
        <dbReference type="ChEBI" id="CHEBI:64716"/>
        <dbReference type="ChEBI" id="CHEBI:64840"/>
        <dbReference type="ChEBI" id="CHEBI:84483"/>
    </reaction>
    <physiologicalReaction direction="left-to-right" evidence="2">
        <dbReference type="Rhea" id="RHEA:78364"/>
    </physiologicalReaction>
</comment>
<comment type="catalytic activity">
    <reaction evidence="2">
        <text>1-octadecanoyl-2-(9Z-octadecenoyl)-sn-glycero-3-phospho-(1'-sn-glycerol) + N-(acetyl)-sphing-4-enine = 1-octadecanoyl-sn-glycero-3-phospho-(1'-sn-glycerol) + 1-(9Z-octadecenoyl)-N-(acetyl)-sphing-4-enine</text>
        <dbReference type="Rhea" id="RHEA:57148"/>
        <dbReference type="ChEBI" id="CHEBI:46979"/>
        <dbReference type="ChEBI" id="CHEBI:72827"/>
        <dbReference type="ChEBI" id="CHEBI:72845"/>
        <dbReference type="ChEBI" id="CHEBI:76054"/>
    </reaction>
    <physiologicalReaction direction="left-to-right" evidence="2">
        <dbReference type="Rhea" id="RHEA:57149"/>
    </physiologicalReaction>
</comment>
<comment type="catalytic activity">
    <reaction evidence="22">
        <text>an N-acylethanolamine + a 1,2-diacyl-sn-glycero-3-phosphocholine = 2-(acylamino)ethyl fatty acid + a 2-acyl-sn-glycero-3-phosphocholine</text>
        <dbReference type="Rhea" id="RHEA:78055"/>
        <dbReference type="ChEBI" id="CHEBI:52640"/>
        <dbReference type="ChEBI" id="CHEBI:57643"/>
        <dbReference type="ChEBI" id="CHEBI:57875"/>
        <dbReference type="ChEBI" id="CHEBI:84481"/>
    </reaction>
    <physiologicalReaction direction="left-to-right" evidence="22">
        <dbReference type="Rhea" id="RHEA:78056"/>
    </physiologicalReaction>
</comment>
<comment type="catalytic activity">
    <reaction evidence="22">
        <text>an N-acylethanolamine + a 1,2-diacyl-sn-glycero-3-phosphocholine = 2-(acylamino)ethyl fatty acid + a 1-acyl-sn-glycero-3-phosphocholine</text>
        <dbReference type="Rhea" id="RHEA:78059"/>
        <dbReference type="ChEBI" id="CHEBI:52640"/>
        <dbReference type="ChEBI" id="CHEBI:57643"/>
        <dbReference type="ChEBI" id="CHEBI:58168"/>
        <dbReference type="ChEBI" id="CHEBI:84481"/>
    </reaction>
    <physiologicalReaction direction="left-to-right" evidence="22">
        <dbReference type="Rhea" id="RHEA:78060"/>
    </physiologicalReaction>
</comment>
<comment type="catalytic activity">
    <reaction evidence="10">
        <text>N-(5Z,8Z,11Z,14Z-eicosatetraenoyl)-ethanolamine + 1,2-di-(9Z-octadecenoyl)-sn-glycero-3-phosphocholine = 2-[(5Z,8Z,11Z,14Z)-eicosatetraenoylamino]ethyl (9Z)-octadecenoate + (9Z-octadecenoyl)-sn-glycero-3-phosphocholine</text>
        <dbReference type="Rhea" id="RHEA:38751"/>
        <dbReference type="ChEBI" id="CHEBI:2700"/>
        <dbReference type="ChEBI" id="CHEBI:74669"/>
        <dbReference type="ChEBI" id="CHEBI:76070"/>
        <dbReference type="ChEBI" id="CHEBI:76083"/>
    </reaction>
    <physiologicalReaction direction="left-to-right" evidence="22">
        <dbReference type="Rhea" id="RHEA:38752"/>
    </physiologicalReaction>
</comment>
<comment type="catalytic activity">
    <reaction evidence="10">
        <text>N-(9Z-octadecenoyl) ethanolamine + 1,2-di-(9Z-octadecenoyl)-sn-glycero-3-phosphocholine = 2-[(9Z)-octadecenoylamino]ethyl (9Z)-octadecenoate + (9Z-octadecenoyl)-sn-glycero-3-phosphocholine</text>
        <dbReference type="Rhea" id="RHEA:38747"/>
        <dbReference type="ChEBI" id="CHEBI:71466"/>
        <dbReference type="ChEBI" id="CHEBI:74669"/>
        <dbReference type="ChEBI" id="CHEBI:76068"/>
        <dbReference type="ChEBI" id="CHEBI:76083"/>
    </reaction>
    <physiologicalReaction direction="left-to-right" evidence="22">
        <dbReference type="Rhea" id="RHEA:38748"/>
    </physiologicalReaction>
</comment>
<comment type="catalytic activity">
    <reaction evidence="22">
        <text>a 3-acyl-sn-glycerol + a 1,2-diacyl-sn-glycero-3-phosphocholine = a 1,3-diacylglycerol + a 1-acyl-sn-glycero-3-phosphocholine</text>
        <dbReference type="Rhea" id="RHEA:78131"/>
        <dbReference type="ChEBI" id="CHEBI:47777"/>
        <dbReference type="ChEBI" id="CHEBI:57643"/>
        <dbReference type="ChEBI" id="CHEBI:58168"/>
        <dbReference type="ChEBI" id="CHEBI:64760"/>
    </reaction>
    <physiologicalReaction direction="left-to-right" evidence="22">
        <dbReference type="Rhea" id="RHEA:78132"/>
    </physiologicalReaction>
</comment>
<comment type="catalytic activity">
    <reaction evidence="22">
        <text>a 3-acyl-sn-glycerol + a 1,2-diacyl-sn-glycero-3-phosphocholine = a 1,3-diacylglycerol + a 2-acyl-sn-glycero-3-phosphocholine</text>
        <dbReference type="Rhea" id="RHEA:78135"/>
        <dbReference type="ChEBI" id="CHEBI:47777"/>
        <dbReference type="ChEBI" id="CHEBI:57643"/>
        <dbReference type="ChEBI" id="CHEBI:57875"/>
        <dbReference type="ChEBI" id="CHEBI:64760"/>
    </reaction>
    <physiologicalReaction direction="left-to-right" evidence="22">
        <dbReference type="Rhea" id="RHEA:78136"/>
    </physiologicalReaction>
</comment>
<comment type="catalytic activity">
    <reaction evidence="10">
        <text>3-(9Z-octadecenoyl)-sn-glycerol + 1,2-di-(9Z-octadecenoyl)-sn-glycero-3-phosphocholine = 1,3-di-(9Z-octadecenoyl)-glycerol + (9Z-octadecenoyl)-sn-glycero-3-phosphocholine</text>
        <dbReference type="Rhea" id="RHEA:38743"/>
        <dbReference type="ChEBI" id="CHEBI:74669"/>
        <dbReference type="ChEBI" id="CHEBI:75735"/>
        <dbReference type="ChEBI" id="CHEBI:75938"/>
        <dbReference type="ChEBI" id="CHEBI:76083"/>
    </reaction>
    <physiologicalReaction direction="left-to-right" evidence="22">
        <dbReference type="Rhea" id="RHEA:38744"/>
    </physiologicalReaction>
</comment>
<comment type="catalytic activity">
    <reaction evidence="10">
        <text>3-hexadecanoyl-sn-glycerol + 1,2-di-(9Z-octadecenoyl)-sn-glycero-3-phosphocholine = 1-(9Z)-octadecenoyl-3-hexadecanoyl-sn-glycerol + (9Z-octadecenoyl)-sn-glycero-3-phosphocholine</text>
        <dbReference type="Rhea" id="RHEA:38731"/>
        <dbReference type="ChEBI" id="CHEBI:64757"/>
        <dbReference type="ChEBI" id="CHEBI:74669"/>
        <dbReference type="ChEBI" id="CHEBI:75867"/>
        <dbReference type="ChEBI" id="CHEBI:76083"/>
    </reaction>
    <physiologicalReaction direction="left-to-right" evidence="22">
        <dbReference type="Rhea" id="RHEA:38732"/>
    </physiologicalReaction>
</comment>
<comment type="catalytic activity">
    <reaction evidence="22">
        <text>a 1-acyl-sn-glycerol + a 1,2-diacyl-sn-glycero-3-phosphocholine = a 1,3-diacylglycerol + a 2-acyl-sn-glycero-3-phosphocholine</text>
        <dbReference type="Rhea" id="RHEA:78139"/>
        <dbReference type="ChEBI" id="CHEBI:47777"/>
        <dbReference type="ChEBI" id="CHEBI:57643"/>
        <dbReference type="ChEBI" id="CHEBI:57875"/>
        <dbReference type="ChEBI" id="CHEBI:64683"/>
    </reaction>
    <physiologicalReaction direction="left-to-right" evidence="22">
        <dbReference type="Rhea" id="RHEA:78140"/>
    </physiologicalReaction>
</comment>
<comment type="catalytic activity">
    <reaction evidence="22">
        <text>a 1-acyl-sn-glycerol + a 1,2-diacyl-sn-glycero-3-phosphocholine = a 1,3-diacylglycerol + a 1-acyl-sn-glycero-3-phosphocholine</text>
        <dbReference type="Rhea" id="RHEA:78143"/>
        <dbReference type="ChEBI" id="CHEBI:47777"/>
        <dbReference type="ChEBI" id="CHEBI:57643"/>
        <dbReference type="ChEBI" id="CHEBI:58168"/>
        <dbReference type="ChEBI" id="CHEBI:64683"/>
    </reaction>
    <physiologicalReaction direction="left-to-right" evidence="22">
        <dbReference type="Rhea" id="RHEA:78144"/>
    </physiologicalReaction>
</comment>
<comment type="catalytic activity">
    <reaction evidence="10">
        <text>1-(9Z-octadecenoyl)-sn-glycerol + 1,2-di-(9Z-octadecenoyl)-sn-glycero-3-phosphocholine = 1,3-di-(9Z-octadecenoyl)-glycerol + (9Z-octadecenoyl)-sn-glycero-3-phosphocholine</text>
        <dbReference type="Rhea" id="RHEA:38739"/>
        <dbReference type="ChEBI" id="CHEBI:74669"/>
        <dbReference type="ChEBI" id="CHEBI:75735"/>
        <dbReference type="ChEBI" id="CHEBI:75757"/>
        <dbReference type="ChEBI" id="CHEBI:76083"/>
    </reaction>
    <physiologicalReaction direction="left-to-right" evidence="22">
        <dbReference type="Rhea" id="RHEA:38740"/>
    </physiologicalReaction>
</comment>
<comment type="catalytic activity">
    <reaction evidence="10">
        <text>1-hexadecanoyl-sn-glycerol + 1,2-di-(9Z-octadecenoyl)-sn-glycero-3-phosphocholine = 1-hexadecanoyl-3-(9Z)-octadecenoyl-sn-glycerol + (9Z-octadecenoyl)-sn-glycero-3-phosphocholine</text>
        <dbReference type="Rhea" id="RHEA:38727"/>
        <dbReference type="ChEBI" id="CHEBI:74669"/>
        <dbReference type="ChEBI" id="CHEBI:75542"/>
        <dbReference type="ChEBI" id="CHEBI:75868"/>
        <dbReference type="ChEBI" id="CHEBI:76083"/>
    </reaction>
    <physiologicalReaction direction="left-to-right" evidence="22">
        <dbReference type="Rhea" id="RHEA:38728"/>
    </physiologicalReaction>
</comment>
<comment type="catalytic activity">
    <reaction evidence="22">
        <text>a 2-acylglycerol + a 1,2-diacyl-sn-glycero-3-phosphocholine = a 1,2-diacylglycerol + a 2-acyl-sn-glycero-3-phosphocholine</text>
        <dbReference type="Rhea" id="RHEA:78443"/>
        <dbReference type="ChEBI" id="CHEBI:17389"/>
        <dbReference type="ChEBI" id="CHEBI:49172"/>
        <dbReference type="ChEBI" id="CHEBI:57643"/>
        <dbReference type="ChEBI" id="CHEBI:57875"/>
    </reaction>
    <physiologicalReaction direction="left-to-right" evidence="22">
        <dbReference type="Rhea" id="RHEA:78444"/>
    </physiologicalReaction>
</comment>
<comment type="catalytic activity">
    <reaction evidence="22">
        <text>a 2-acylglycerol + a 1,2-diacyl-sn-glycero-3-phosphocholine = a 1,2-diacylglycerol + a 1-acyl-sn-glycero-3-phosphocholine</text>
        <dbReference type="Rhea" id="RHEA:78439"/>
        <dbReference type="ChEBI" id="CHEBI:17389"/>
        <dbReference type="ChEBI" id="CHEBI:49172"/>
        <dbReference type="ChEBI" id="CHEBI:57643"/>
        <dbReference type="ChEBI" id="CHEBI:58168"/>
    </reaction>
    <physiologicalReaction direction="left-to-right" evidence="22">
        <dbReference type="Rhea" id="RHEA:78440"/>
    </physiologicalReaction>
</comment>
<comment type="catalytic activity">
    <reaction evidence="10">
        <text>2-hexadecanoylglycerol + 1,2-di-(9Z-octadecenoyl)-sn-glycero-3-phosphocholine = 1-(9Z)-octadecenoyl-2-hexadecanoylglycerol + (9Z-octadecenoyl)-sn-glycero-3-phosphocholine</text>
        <dbReference type="Rhea" id="RHEA:38735"/>
        <dbReference type="ChEBI" id="CHEBI:74669"/>
        <dbReference type="ChEBI" id="CHEBI:75455"/>
        <dbReference type="ChEBI" id="CHEBI:76065"/>
        <dbReference type="ChEBI" id="CHEBI:76083"/>
    </reaction>
    <physiologicalReaction direction="left-to-right" evidence="22">
        <dbReference type="Rhea" id="RHEA:38736"/>
    </physiologicalReaction>
</comment>
<comment type="catalytic activity">
    <reaction evidence="22">
        <text>1-O-alkylglycerol + a 1,2-diacyl-sn-glycero-3-phosphocholine = 1-O-alkyl-3-acylglycerol + a 1-acyl-sn-glycero-3-phosphocholine</text>
        <dbReference type="Rhea" id="RHEA:78039"/>
        <dbReference type="ChEBI" id="CHEBI:57643"/>
        <dbReference type="ChEBI" id="CHEBI:58168"/>
        <dbReference type="ChEBI" id="CHEBI:76225"/>
        <dbReference type="ChEBI" id="CHEBI:77997"/>
    </reaction>
    <physiologicalReaction direction="left-to-right" evidence="22">
        <dbReference type="Rhea" id="RHEA:78040"/>
    </physiologicalReaction>
</comment>
<comment type="catalytic activity">
    <reaction evidence="22">
        <text>1-O-alkylglycerol + a 1,2-diacyl-sn-glycero-3-phosphocholine = 1-O-alkyl-3-acylglycerol + a 2-acyl-sn-glycero-3-phosphocholine</text>
        <dbReference type="Rhea" id="RHEA:78043"/>
        <dbReference type="ChEBI" id="CHEBI:57643"/>
        <dbReference type="ChEBI" id="CHEBI:57875"/>
        <dbReference type="ChEBI" id="CHEBI:76225"/>
        <dbReference type="ChEBI" id="CHEBI:77997"/>
    </reaction>
    <physiologicalReaction direction="left-to-right" evidence="22">
        <dbReference type="Rhea" id="RHEA:78044"/>
    </physiologicalReaction>
</comment>
<comment type="catalytic activity">
    <reaction evidence="10">
        <text>1-O-hexadecylglycerol + 1,2-di-(9Z-octadecenoyl)-sn-glycero-3-phosphocholine = 1-O-hexadecyl-3-(9Z)-octadecenoylglycerol + (9Z-octadecenoyl)-sn-glycero-3-phosphocholine</text>
        <dbReference type="Rhea" id="RHEA:38711"/>
        <dbReference type="ChEBI" id="CHEBI:74669"/>
        <dbReference type="ChEBI" id="CHEBI:76061"/>
        <dbReference type="ChEBI" id="CHEBI:76062"/>
        <dbReference type="ChEBI" id="CHEBI:76083"/>
    </reaction>
    <physiologicalReaction direction="left-to-right" evidence="22">
        <dbReference type="Rhea" id="RHEA:38712"/>
    </physiologicalReaction>
</comment>
<comment type="catalytic activity">
    <reaction evidence="22">
        <text>1-O-alkyl-2-acyl-sn-glycerol + a 1,2-diacyl-sn-glycero-3-phosphocholine = 1-O-alkyl-2,3-diacyl-sn-glycerol + a 2-acyl-sn-glycero-3-phosphocholine</text>
        <dbReference type="Rhea" id="RHEA:78431"/>
        <dbReference type="ChEBI" id="CHEBI:52595"/>
        <dbReference type="ChEBI" id="CHEBI:57643"/>
        <dbReference type="ChEBI" id="CHEBI:57875"/>
        <dbReference type="ChEBI" id="CHEBI:76585"/>
    </reaction>
    <physiologicalReaction direction="left-to-right" evidence="22">
        <dbReference type="Rhea" id="RHEA:78432"/>
    </physiologicalReaction>
</comment>
<comment type="catalytic activity">
    <reaction evidence="22">
        <text>1-O-alkyl-2-acyl-sn-glycerol + a 1,2-diacyl-sn-glycero-3-phosphocholine = 1-O-alkyl-2,3-diacyl-sn-glycerol + a 1-acyl-sn-glycero-3-phosphocholine</text>
        <dbReference type="Rhea" id="RHEA:78435"/>
        <dbReference type="ChEBI" id="CHEBI:52595"/>
        <dbReference type="ChEBI" id="CHEBI:57643"/>
        <dbReference type="ChEBI" id="CHEBI:58168"/>
        <dbReference type="ChEBI" id="CHEBI:76585"/>
    </reaction>
    <physiologicalReaction direction="left-to-right" evidence="22">
        <dbReference type="Rhea" id="RHEA:78436"/>
    </physiologicalReaction>
</comment>
<comment type="catalytic activity">
    <reaction evidence="10">
        <text>1-O-hexadecyl-2-acetyl-sn-glycerol + 1,2-di-(9Z-octadecenoyl)-sn-glycero-3-phosphocholine = 1-O-hexadecyl-2-acetyl-3-(9Z)-octadecenoyl-sn-glycerol + (9Z-octadecenoyl)-sn-glycero-3-phosphocholine</text>
        <dbReference type="Rhea" id="RHEA:38707"/>
        <dbReference type="ChEBI" id="CHEBI:74669"/>
        <dbReference type="ChEBI" id="CHEBI:75936"/>
        <dbReference type="ChEBI" id="CHEBI:76055"/>
        <dbReference type="ChEBI" id="CHEBI:76083"/>
    </reaction>
    <physiologicalReaction direction="left-to-right" evidence="22">
        <dbReference type="Rhea" id="RHEA:38708"/>
    </physiologicalReaction>
</comment>
<comment type="catalytic activity">
    <reaction evidence="10">
        <text>1-O-hexadecyl-2-O-methyl-sn-glycerol + 1,2-di-(9Z-octadecenoyl)-sn-glycero-3-phosphocholine = 1-O-hexadecyl-2-O-methyl-3-(9Z)-octadecenoyl-sn-glycerol + (9Z-octadecenoyl)-sn-glycero-3-phosphocholine</text>
        <dbReference type="Rhea" id="RHEA:38723"/>
        <dbReference type="ChEBI" id="CHEBI:74669"/>
        <dbReference type="ChEBI" id="CHEBI:76063"/>
        <dbReference type="ChEBI" id="CHEBI:76064"/>
        <dbReference type="ChEBI" id="CHEBI:76083"/>
    </reaction>
    <physiologicalReaction direction="left-to-right" evidence="22">
        <dbReference type="Rhea" id="RHEA:38724"/>
    </physiologicalReaction>
</comment>
<comment type="catalytic activity">
    <reaction evidence="3">
        <text>a 1,2-diacyl-sn-glycero-3-phosphoethanolamine + H2O = a 1-acyl-sn-glycero-3-phosphoethanolamine + a fatty acid + H(+)</text>
        <dbReference type="Rhea" id="RHEA:44604"/>
        <dbReference type="ChEBI" id="CHEBI:15377"/>
        <dbReference type="ChEBI" id="CHEBI:15378"/>
        <dbReference type="ChEBI" id="CHEBI:28868"/>
        <dbReference type="ChEBI" id="CHEBI:64381"/>
        <dbReference type="ChEBI" id="CHEBI:64612"/>
    </reaction>
    <physiologicalReaction direction="left-to-right" evidence="3">
        <dbReference type="Rhea" id="RHEA:44605"/>
    </physiologicalReaction>
</comment>
<comment type="catalytic activity">
    <reaction evidence="3">
        <text>1-acyl-2-(5Z,8Z,11Z,14Z)-eicosatetraenoyl-sn-glycero-3-phosphoethanolamine + H2O = a 1-acyl-sn-glycero-3-phosphoethanolamine + (5Z,8Z,11Z,14Z)-eicosatetraenoate + H(+)</text>
        <dbReference type="Rhea" id="RHEA:40647"/>
        <dbReference type="ChEBI" id="CHEBI:15377"/>
        <dbReference type="ChEBI" id="CHEBI:15378"/>
        <dbReference type="ChEBI" id="CHEBI:32395"/>
        <dbReference type="ChEBI" id="CHEBI:64381"/>
        <dbReference type="ChEBI" id="CHEBI:75067"/>
    </reaction>
    <physiologicalReaction direction="left-to-right" evidence="3">
        <dbReference type="Rhea" id="RHEA:40648"/>
    </physiologicalReaction>
</comment>
<comment type="catalytic activity">
    <reaction evidence="2">
        <text>a 1,2-diacyl-sn-glycero-3-phospho-(1'-sn-glycerol) + H2O = 1-acyl-sn-glycero-3-phospho-(1'-sn-glycerol) + a fatty acid + H(+)</text>
        <dbReference type="Rhea" id="RHEA:44416"/>
        <dbReference type="ChEBI" id="CHEBI:15377"/>
        <dbReference type="ChEBI" id="CHEBI:15378"/>
        <dbReference type="ChEBI" id="CHEBI:28868"/>
        <dbReference type="ChEBI" id="CHEBI:64716"/>
        <dbReference type="ChEBI" id="CHEBI:64840"/>
    </reaction>
    <physiologicalReaction direction="left-to-right" evidence="2">
        <dbReference type="Rhea" id="RHEA:44417"/>
    </physiologicalReaction>
</comment>
<comment type="catalytic activity">
    <reaction evidence="2">
        <text>1-hexadecanoyl-2-(9Z-octadecenoyl)-sn-glycero-3-phospho-(1'-sn-glycerol) + H2O = 1-hexadecanoyl-sn-glycero-3-phospho-(1'-sn-glycerol) + (9Z)-octadecenoate + H(+)</text>
        <dbReference type="Rhea" id="RHEA:40919"/>
        <dbReference type="ChEBI" id="CHEBI:15377"/>
        <dbReference type="ChEBI" id="CHEBI:15378"/>
        <dbReference type="ChEBI" id="CHEBI:30823"/>
        <dbReference type="ChEBI" id="CHEBI:72841"/>
        <dbReference type="ChEBI" id="CHEBI:75158"/>
    </reaction>
    <physiologicalReaction direction="left-to-right" evidence="2">
        <dbReference type="Rhea" id="RHEA:40920"/>
    </physiologicalReaction>
</comment>
<comment type="catalytic activity">
    <reaction evidence="2">
        <text>a 1,2-diacyl-sn-glycero-3-phospho-(1'-sn-glycerol) + H2O = 2-acyl-sn-glycero-3-phospho-(1'-sn-glycerol) + a fatty acid + H(+)</text>
        <dbReference type="Rhea" id="RHEA:67428"/>
        <dbReference type="ChEBI" id="CHEBI:15377"/>
        <dbReference type="ChEBI" id="CHEBI:15378"/>
        <dbReference type="ChEBI" id="CHEBI:28868"/>
        <dbReference type="ChEBI" id="CHEBI:64716"/>
        <dbReference type="ChEBI" id="CHEBI:76528"/>
    </reaction>
    <physiologicalReaction direction="left-to-right" evidence="2">
        <dbReference type="Rhea" id="RHEA:67429"/>
    </physiologicalReaction>
</comment>
<comment type="catalytic activity">
    <reaction evidence="2">
        <text>1-hexadecanoyl-2-(9Z-octadecenoyl)-sn-glycero-3-phospho-(1'-sn-glycerol) + H2O = 2-(9Z-octadecenoyl)-sn-glycero-3-phospho-(1'-sn-glycerol) + hexadecanoate + H(+)</text>
        <dbReference type="Rhea" id="RHEA:74103"/>
        <dbReference type="ChEBI" id="CHEBI:7896"/>
        <dbReference type="ChEBI" id="CHEBI:15377"/>
        <dbReference type="ChEBI" id="CHEBI:15378"/>
        <dbReference type="ChEBI" id="CHEBI:72841"/>
        <dbReference type="ChEBI" id="CHEBI:141490"/>
    </reaction>
    <physiologicalReaction direction="left-to-right" evidence="2">
        <dbReference type="Rhea" id="RHEA:74104"/>
    </physiologicalReaction>
</comment>
<comment type="activity regulation">
    <text evidence="8 13">Phospholipase sn-2 versus sn-1 positional specificity is affected by the phospholipid composition of membranes. Phospholipase A2 activity toward 1-hexadecanoyl-2-(5Z,8Z,11Z,14Z-eicosatetraenoyl)-sn-glycero-3-phosphocholine (PAPE) is enhanced in the presence of 1,2-dioleoyl-sn-glycero-3-phosphocholine (DOPC), which promotes lipid bilayer formation (PubMed:16837646). O-acyltransferase activity is inhibited by antiarrhythmic drug amiodarone (PubMed:27993948).</text>
</comment>
<comment type="biophysicochemical properties">
    <kinetics>
        <KM evidence="12">171 uM for 1,2-di-(9Z-octadecenoyl)-sn-glycero-3-phosphocholine (O-acyltransferase activity)</KM>
        <Vmax evidence="12">5.55 umol/min/mg enzyme toward 1,2-di-(9Z-octadecenoyl)-sn-glycero-3-phosphocholine (O-acyltransferase activity)</Vmax>
    </kinetics>
    <phDependence>
        <text evidence="23">Optimum pH is 4.5.</text>
    </phDependence>
</comment>
<comment type="subcellular location">
    <subcellularLocation>
        <location evidence="11 12">Secreted</location>
    </subcellularLocation>
    <subcellularLocation>
        <location evidence="11">Lysosome</location>
    </subcellularLocation>
    <subcellularLocation>
        <location evidence="2">Membrane</location>
        <topology evidence="2">Peripheral membrane protein</topology>
    </subcellularLocation>
</comment>
<comment type="tissue specificity">
    <text evidence="7 9 11 12">Detected in blood plasma (PubMed:20410020). Detected in alveolar macrophages (at protein level) (PubMed:16106046, PubMed:16880524, PubMed:19017977). Detected in heart, liver, spleen, kidney, thymus, brain and lung (PubMed:16880524).</text>
</comment>
<comment type="PTM">
    <text evidence="2 5">N-glycosylated (PubMed:11790796). N-glycosylation is important for maturation of the enzyme and normal subcellular location (By similarity).</text>
</comment>
<comment type="disruption phenotype">
    <text evidence="9">Mice are born at the expected Mendelian rate, are viable and fertile. They display strongly reduced transacylase activity in lung alveolar macrophages and in peritoneal macrophages, leading to the accumulation of pulmonary surfactant phospholipids with phosphatidylethanolamine and phosphatidylcholine headgroups. Mice display higher numers of alveolar macrophages in the lung, together with a mononuclear cell infiltrate in airways and blood vessels. Alveolar nmacrophages are larger than normal and present lamellar inclusion bodies, indicative of cellular phospholipidosis. Besides, mutant mice display splenomegaly.</text>
</comment>
<comment type="similarity">
    <text evidence="16">Belongs to the AB hydrolase superfamily. Lipase family.</text>
</comment>
<dbReference type="EC" id="2.3.1.-" evidence="5 7 8 9 11 12 13"/>
<dbReference type="EC" id="3.1.1.32" evidence="8 13"/>
<dbReference type="EC" id="3.1.1.4" evidence="8"/>
<dbReference type="EC" id="3.1.1.5" evidence="2"/>
<dbReference type="EMBL" id="AF468958">
    <property type="protein sequence ID" value="AAL78651.1"/>
    <property type="molecule type" value="mRNA"/>
</dbReference>
<dbReference type="EMBL" id="AY179884">
    <property type="protein sequence ID" value="AAO49009.1"/>
    <property type="molecule type" value="Genomic_DNA"/>
</dbReference>
<dbReference type="EMBL" id="AK085194">
    <property type="protein sequence ID" value="BAC39387.1"/>
    <property type="molecule type" value="mRNA"/>
</dbReference>
<dbReference type="EMBL" id="AK155004">
    <property type="protein sequence ID" value="BAE32987.1"/>
    <property type="molecule type" value="mRNA"/>
</dbReference>
<dbReference type="EMBL" id="AK163111">
    <property type="protein sequence ID" value="BAE37197.1"/>
    <property type="molecule type" value="mRNA"/>
</dbReference>
<dbReference type="EMBL" id="AK170814">
    <property type="protein sequence ID" value="BAE42046.1"/>
    <property type="molecule type" value="mRNA"/>
</dbReference>
<dbReference type="EMBL" id="BC019373">
    <property type="protein sequence ID" value="AAH19373.1"/>
    <property type="molecule type" value="mRNA"/>
</dbReference>
<dbReference type="CCDS" id="CCDS22630.1"/>
<dbReference type="RefSeq" id="NP_598553.1">
    <property type="nucleotide sequence ID" value="NM_133792.3"/>
</dbReference>
<dbReference type="SMR" id="Q8VEB4"/>
<dbReference type="BioGRID" id="228695">
    <property type="interactions" value="19"/>
</dbReference>
<dbReference type="FunCoup" id="Q8VEB4">
    <property type="interactions" value="1876"/>
</dbReference>
<dbReference type="IntAct" id="Q8VEB4">
    <property type="interactions" value="1"/>
</dbReference>
<dbReference type="STRING" id="10090.ENSMUSP00000034377"/>
<dbReference type="ChEMBL" id="CHEMBL3259497"/>
<dbReference type="SwissLipids" id="SLP:000000352"/>
<dbReference type="ESTHER" id="mouse-C87498">
    <property type="family name" value="PC-sterol_acyltransferase"/>
</dbReference>
<dbReference type="GlyConnect" id="2363">
    <property type="glycosylation" value="7 N-Linked glycans (4 sites)"/>
</dbReference>
<dbReference type="GlyCosmos" id="Q8VEB4">
    <property type="glycosylation" value="4 sites, 7 glycans"/>
</dbReference>
<dbReference type="GlyGen" id="Q8VEB4">
    <property type="glycosylation" value="4 sites, 10 N-linked glycans (4 sites)"/>
</dbReference>
<dbReference type="iPTMnet" id="Q8VEB4"/>
<dbReference type="PhosphoSitePlus" id="Q8VEB4"/>
<dbReference type="jPOST" id="Q8VEB4"/>
<dbReference type="PaxDb" id="10090-ENSMUSP00000034377"/>
<dbReference type="PeptideAtlas" id="Q8VEB4"/>
<dbReference type="ProteomicsDB" id="294151"/>
<dbReference type="Pumba" id="Q8VEB4"/>
<dbReference type="Antibodypedia" id="29747">
    <property type="antibodies" value="106 antibodies from 18 providers"/>
</dbReference>
<dbReference type="DNASU" id="192654"/>
<dbReference type="Ensembl" id="ENSMUST00000034377.8">
    <property type="protein sequence ID" value="ENSMUSP00000034377.7"/>
    <property type="gene ID" value="ENSMUSG00000031903.8"/>
</dbReference>
<dbReference type="GeneID" id="192654"/>
<dbReference type="KEGG" id="mmu:192654"/>
<dbReference type="UCSC" id="uc009nfj.1">
    <property type="organism name" value="mouse"/>
</dbReference>
<dbReference type="AGR" id="MGI:2178076"/>
<dbReference type="CTD" id="23659"/>
<dbReference type="MGI" id="MGI:2178076">
    <property type="gene designation" value="Pla2g15"/>
</dbReference>
<dbReference type="VEuPathDB" id="HostDB:ENSMUSG00000031903"/>
<dbReference type="eggNOG" id="KOG2369">
    <property type="taxonomic scope" value="Eukaryota"/>
</dbReference>
<dbReference type="GeneTree" id="ENSGT00940000157499"/>
<dbReference type="HOGENOM" id="CLU_037070_1_1_1"/>
<dbReference type="InParanoid" id="Q8VEB4"/>
<dbReference type="OMA" id="QMTPPGV"/>
<dbReference type="OrthoDB" id="190846at2759"/>
<dbReference type="PhylomeDB" id="Q8VEB4"/>
<dbReference type="TreeFam" id="TF313258"/>
<dbReference type="Reactome" id="R-MMU-1483115">
    <property type="pathway name" value="Hydrolysis of LPC"/>
</dbReference>
<dbReference type="BioGRID-ORCS" id="192654">
    <property type="hits" value="6 hits in 81 CRISPR screens"/>
</dbReference>
<dbReference type="ChiTaRS" id="Pla2g15">
    <property type="organism name" value="mouse"/>
</dbReference>
<dbReference type="PRO" id="PR:Q8VEB4"/>
<dbReference type="Proteomes" id="UP000000589">
    <property type="component" value="Chromosome 8"/>
</dbReference>
<dbReference type="RNAct" id="Q8VEB4">
    <property type="molecule type" value="protein"/>
</dbReference>
<dbReference type="Bgee" id="ENSMUSG00000031903">
    <property type="expression patterns" value="Expressed in stroma of bone marrow and 214 other cell types or tissues"/>
</dbReference>
<dbReference type="ExpressionAtlas" id="Q8VEB4">
    <property type="expression patterns" value="baseline and differential"/>
</dbReference>
<dbReference type="GO" id="GO:0005615">
    <property type="term" value="C:extracellular space"/>
    <property type="evidence" value="ECO:0000314"/>
    <property type="project" value="UniProtKB"/>
</dbReference>
<dbReference type="GO" id="GO:0005764">
    <property type="term" value="C:lysosome"/>
    <property type="evidence" value="ECO:0000314"/>
    <property type="project" value="MGI"/>
</dbReference>
<dbReference type="GO" id="GO:0016020">
    <property type="term" value="C:membrane"/>
    <property type="evidence" value="ECO:0007669"/>
    <property type="project" value="UniProtKB-SubCell"/>
</dbReference>
<dbReference type="GO" id="GO:0005739">
    <property type="term" value="C:mitochondrion"/>
    <property type="evidence" value="ECO:0007005"/>
    <property type="project" value="MGI"/>
</dbReference>
<dbReference type="GO" id="GO:0005654">
    <property type="term" value="C:nucleoplasm"/>
    <property type="evidence" value="ECO:0007669"/>
    <property type="project" value="Ensembl"/>
</dbReference>
<dbReference type="GO" id="GO:0016411">
    <property type="term" value="F:acylglycerol O-acyltransferase activity"/>
    <property type="evidence" value="ECO:0000314"/>
    <property type="project" value="UniProtKB"/>
</dbReference>
<dbReference type="GO" id="GO:0047499">
    <property type="term" value="F:calcium-independent phospholipase A2 activity"/>
    <property type="evidence" value="ECO:0000314"/>
    <property type="project" value="UniProtKB"/>
</dbReference>
<dbReference type="GO" id="GO:0008374">
    <property type="term" value="F:O-acyltransferase activity"/>
    <property type="evidence" value="ECO:0000314"/>
    <property type="project" value="UniProtKB"/>
</dbReference>
<dbReference type="GO" id="GO:0008970">
    <property type="term" value="F:phospholipase A1 activity"/>
    <property type="evidence" value="ECO:0000314"/>
    <property type="project" value="UniProtKB"/>
</dbReference>
<dbReference type="GO" id="GO:0008270">
    <property type="term" value="F:zinc ion binding"/>
    <property type="evidence" value="ECO:0000250"/>
    <property type="project" value="UniProtKB"/>
</dbReference>
<dbReference type="GO" id="GO:0006672">
    <property type="term" value="P:ceramide metabolic process"/>
    <property type="evidence" value="ECO:0000314"/>
    <property type="project" value="UniProtKB"/>
</dbReference>
<dbReference type="GO" id="GO:0006651">
    <property type="term" value="P:diacylglycerol biosynthetic process"/>
    <property type="evidence" value="ECO:0000314"/>
    <property type="project" value="UniProtKB"/>
</dbReference>
<dbReference type="GO" id="GO:0006631">
    <property type="term" value="P:fatty acid metabolic process"/>
    <property type="evidence" value="ECO:0007669"/>
    <property type="project" value="UniProtKB-KW"/>
</dbReference>
<dbReference type="GO" id="GO:0006650">
    <property type="term" value="P:glycerophospholipid metabolic process"/>
    <property type="evidence" value="ECO:0000314"/>
    <property type="project" value="UniProtKB"/>
</dbReference>
<dbReference type="GO" id="GO:0034638">
    <property type="term" value="P:phosphatidylcholine catabolic process"/>
    <property type="evidence" value="ECO:0000314"/>
    <property type="project" value="UniProtKB"/>
</dbReference>
<dbReference type="GO" id="GO:0046338">
    <property type="term" value="P:phosphatidylethanolamine catabolic process"/>
    <property type="evidence" value="ECO:0000314"/>
    <property type="project" value="UniProtKB"/>
</dbReference>
<dbReference type="GO" id="GO:0046471">
    <property type="term" value="P:phosphatidylglycerol metabolic process"/>
    <property type="evidence" value="ECO:0000250"/>
    <property type="project" value="UniProtKB"/>
</dbReference>
<dbReference type="GO" id="GO:0006658">
    <property type="term" value="P:phosphatidylserine metabolic process"/>
    <property type="evidence" value="ECO:0000250"/>
    <property type="project" value="UniProtKB"/>
</dbReference>
<dbReference type="FunFam" id="3.40.50.1820:FF:000221">
    <property type="entry name" value="Group XV phospholipase A2"/>
    <property type="match status" value="1"/>
</dbReference>
<dbReference type="FunFam" id="3.40.50.1820:FF:000166">
    <property type="entry name" value="group XV phospholipase A2 isoform X1"/>
    <property type="match status" value="1"/>
</dbReference>
<dbReference type="Gene3D" id="3.40.50.1820">
    <property type="entry name" value="alpha/beta hydrolase"/>
    <property type="match status" value="2"/>
</dbReference>
<dbReference type="InterPro" id="IPR029058">
    <property type="entry name" value="AB_hydrolase_fold"/>
</dbReference>
<dbReference type="InterPro" id="IPR003386">
    <property type="entry name" value="LACT/PDAT_acylTrfase"/>
</dbReference>
<dbReference type="PANTHER" id="PTHR11440">
    <property type="entry name" value="LECITHIN-CHOLESTEROL ACYLTRANSFERASE-RELATED"/>
    <property type="match status" value="1"/>
</dbReference>
<dbReference type="Pfam" id="PF02450">
    <property type="entry name" value="LCAT"/>
    <property type="match status" value="1"/>
</dbReference>
<dbReference type="SUPFAM" id="SSF53474">
    <property type="entry name" value="alpha/beta-Hydrolases"/>
    <property type="match status" value="1"/>
</dbReference>
<accession>Q8VEB4</accession>
<accession>Q3TCB1</accession>
<accession>Q3U303</accession>
<feature type="signal peptide" evidence="2">
    <location>
        <begin position="1"/>
        <end position="33"/>
    </location>
</feature>
<feature type="chain" id="PRO_0000017809" description="Lysosomal phospholipase A and acyltransferase">
    <location>
        <begin position="34"/>
        <end position="412"/>
    </location>
</feature>
<feature type="active site" description="Acyl-ester intermediate" evidence="4 17 19">
    <location>
        <position position="198"/>
    </location>
</feature>
<feature type="active site" description="Charge relay system" evidence="2 19">
    <location>
        <position position="360"/>
    </location>
</feature>
<feature type="active site" description="Charge relay system" evidence="2 19">
    <location>
        <position position="392"/>
    </location>
</feature>
<feature type="binding site" evidence="2">
    <location>
        <position position="46"/>
    </location>
    <ligand>
        <name>substrate</name>
    </ligand>
</feature>
<feature type="binding site" evidence="2">
    <location>
        <position position="198"/>
    </location>
    <ligand>
        <name>Zn(2+)</name>
        <dbReference type="ChEBI" id="CHEBI:29105"/>
    </ligand>
</feature>
<feature type="binding site" evidence="2">
    <location>
        <position position="199"/>
    </location>
    <ligand>
        <name>substrate</name>
    </ligand>
</feature>
<feature type="binding site" evidence="2">
    <location>
        <position position="355"/>
    </location>
    <ligand>
        <name>Zn(2+)</name>
        <dbReference type="ChEBI" id="CHEBI:29105"/>
    </ligand>
</feature>
<feature type="binding site" evidence="2">
    <location>
        <position position="392"/>
    </location>
    <ligand>
        <name>Zn(2+)</name>
        <dbReference type="ChEBI" id="CHEBI:29105"/>
    </ligand>
</feature>
<feature type="glycosylation site" description="N-linked (GlcNAc...) asparagine" evidence="4">
    <location>
        <position position="99"/>
    </location>
</feature>
<feature type="glycosylation site" description="N-linked (GlcNAc...) asparagine" evidence="4">
    <location>
        <position position="273"/>
    </location>
</feature>
<feature type="glycosylation site" description="N-linked (GlcNAc...) asparagine" evidence="4">
    <location>
        <position position="289"/>
    </location>
</feature>
<feature type="glycosylation site" description="N-linked (GlcNAc...) asparagine" evidence="4">
    <location>
        <position position="398"/>
    </location>
</feature>
<feature type="disulfide bond" evidence="2 19">
    <location>
        <begin position="65"/>
        <end position="89"/>
    </location>
</feature>
<feature type="mutagenesis site" description="Abolishes enzyme activity." evidence="7">
    <original>C</original>
    <variation>A</variation>
    <location>
        <position position="65"/>
    </location>
</feature>
<feature type="mutagenesis site" description="Abolishes enzyme activity." evidence="7">
    <original>C</original>
    <variation>A</variation>
    <location>
        <position position="89"/>
    </location>
</feature>
<feature type="mutagenesis site" description="Abolishes enzyme activity." evidence="5 7">
    <original>S</original>
    <variation>A</variation>
    <location>
        <position position="198"/>
    </location>
</feature>
<feature type="mutagenesis site" description="Abolishes enzyme activity." evidence="7">
    <original>D</original>
    <variation>A</variation>
    <location>
        <position position="360"/>
    </location>
</feature>
<feature type="mutagenesis site" description="Abolishes enzyme activity." evidence="7">
    <original>H</original>
    <variation>A</variation>
    <location>
        <position position="392"/>
    </location>
</feature>
<feature type="sequence conflict" description="In Ref. 2; BAE32987." evidence="16" ref="2">
    <original>F</original>
    <variation>S</variation>
    <location>
        <position position="342"/>
    </location>
</feature>
<reference key="1">
    <citation type="journal article" date="2002" name="J. Biol. Chem.">
        <title>Cloning and characterization of a lysosomal phospholipase A2, 1-O-acylceramide synthase.</title>
        <authorList>
            <person name="Hiraoka M."/>
            <person name="Abe A."/>
            <person name="Shayman J.A."/>
        </authorList>
    </citation>
    <scope>NUCLEOTIDE SEQUENCE [GENOMIC DNA / MRNA]</scope>
    <scope>FUNCTION</scope>
    <scope>CATALYTIC ACTIVITY</scope>
    <scope>MUTAGENESIS OF SER-198</scope>
    <scope>GLYCOSYLATION</scope>
    <source>
        <strain>129/Sv</strain>
        <strain>C57BL/6J</strain>
        <tissue>Kidney</tissue>
    </source>
</reference>
<reference key="2">
    <citation type="journal article" date="2005" name="Science">
        <title>The transcriptional landscape of the mammalian genome.</title>
        <authorList>
            <person name="Carninci P."/>
            <person name="Kasukawa T."/>
            <person name="Katayama S."/>
            <person name="Gough J."/>
            <person name="Frith M.C."/>
            <person name="Maeda N."/>
            <person name="Oyama R."/>
            <person name="Ravasi T."/>
            <person name="Lenhard B."/>
            <person name="Wells C."/>
            <person name="Kodzius R."/>
            <person name="Shimokawa K."/>
            <person name="Bajic V.B."/>
            <person name="Brenner S.E."/>
            <person name="Batalov S."/>
            <person name="Forrest A.R."/>
            <person name="Zavolan M."/>
            <person name="Davis M.J."/>
            <person name="Wilming L.G."/>
            <person name="Aidinis V."/>
            <person name="Allen J.E."/>
            <person name="Ambesi-Impiombato A."/>
            <person name="Apweiler R."/>
            <person name="Aturaliya R.N."/>
            <person name="Bailey T.L."/>
            <person name="Bansal M."/>
            <person name="Baxter L."/>
            <person name="Beisel K.W."/>
            <person name="Bersano T."/>
            <person name="Bono H."/>
            <person name="Chalk A.M."/>
            <person name="Chiu K.P."/>
            <person name="Choudhary V."/>
            <person name="Christoffels A."/>
            <person name="Clutterbuck D.R."/>
            <person name="Crowe M.L."/>
            <person name="Dalla E."/>
            <person name="Dalrymple B.P."/>
            <person name="de Bono B."/>
            <person name="Della Gatta G."/>
            <person name="di Bernardo D."/>
            <person name="Down T."/>
            <person name="Engstrom P."/>
            <person name="Fagiolini M."/>
            <person name="Faulkner G."/>
            <person name="Fletcher C.F."/>
            <person name="Fukushima T."/>
            <person name="Furuno M."/>
            <person name="Futaki S."/>
            <person name="Gariboldi M."/>
            <person name="Georgii-Hemming P."/>
            <person name="Gingeras T.R."/>
            <person name="Gojobori T."/>
            <person name="Green R.E."/>
            <person name="Gustincich S."/>
            <person name="Harbers M."/>
            <person name="Hayashi Y."/>
            <person name="Hensch T.K."/>
            <person name="Hirokawa N."/>
            <person name="Hill D."/>
            <person name="Huminiecki L."/>
            <person name="Iacono M."/>
            <person name="Ikeo K."/>
            <person name="Iwama A."/>
            <person name="Ishikawa T."/>
            <person name="Jakt M."/>
            <person name="Kanapin A."/>
            <person name="Katoh M."/>
            <person name="Kawasawa Y."/>
            <person name="Kelso J."/>
            <person name="Kitamura H."/>
            <person name="Kitano H."/>
            <person name="Kollias G."/>
            <person name="Krishnan S.P."/>
            <person name="Kruger A."/>
            <person name="Kummerfeld S.K."/>
            <person name="Kurochkin I.V."/>
            <person name="Lareau L.F."/>
            <person name="Lazarevic D."/>
            <person name="Lipovich L."/>
            <person name="Liu J."/>
            <person name="Liuni S."/>
            <person name="McWilliam S."/>
            <person name="Madan Babu M."/>
            <person name="Madera M."/>
            <person name="Marchionni L."/>
            <person name="Matsuda H."/>
            <person name="Matsuzawa S."/>
            <person name="Miki H."/>
            <person name="Mignone F."/>
            <person name="Miyake S."/>
            <person name="Morris K."/>
            <person name="Mottagui-Tabar S."/>
            <person name="Mulder N."/>
            <person name="Nakano N."/>
            <person name="Nakauchi H."/>
            <person name="Ng P."/>
            <person name="Nilsson R."/>
            <person name="Nishiguchi S."/>
            <person name="Nishikawa S."/>
            <person name="Nori F."/>
            <person name="Ohara O."/>
            <person name="Okazaki Y."/>
            <person name="Orlando V."/>
            <person name="Pang K.C."/>
            <person name="Pavan W.J."/>
            <person name="Pavesi G."/>
            <person name="Pesole G."/>
            <person name="Petrovsky N."/>
            <person name="Piazza S."/>
            <person name="Reed J."/>
            <person name="Reid J.F."/>
            <person name="Ring B.Z."/>
            <person name="Ringwald M."/>
            <person name="Rost B."/>
            <person name="Ruan Y."/>
            <person name="Salzberg S.L."/>
            <person name="Sandelin A."/>
            <person name="Schneider C."/>
            <person name="Schoenbach C."/>
            <person name="Sekiguchi K."/>
            <person name="Semple C.A."/>
            <person name="Seno S."/>
            <person name="Sessa L."/>
            <person name="Sheng Y."/>
            <person name="Shibata Y."/>
            <person name="Shimada H."/>
            <person name="Shimada K."/>
            <person name="Silva D."/>
            <person name="Sinclair B."/>
            <person name="Sperling S."/>
            <person name="Stupka E."/>
            <person name="Sugiura K."/>
            <person name="Sultana R."/>
            <person name="Takenaka Y."/>
            <person name="Taki K."/>
            <person name="Tammoja K."/>
            <person name="Tan S.L."/>
            <person name="Tang S."/>
            <person name="Taylor M.S."/>
            <person name="Tegner J."/>
            <person name="Teichmann S.A."/>
            <person name="Ueda H.R."/>
            <person name="van Nimwegen E."/>
            <person name="Verardo R."/>
            <person name="Wei C.L."/>
            <person name="Yagi K."/>
            <person name="Yamanishi H."/>
            <person name="Zabarovsky E."/>
            <person name="Zhu S."/>
            <person name="Zimmer A."/>
            <person name="Hide W."/>
            <person name="Bult C."/>
            <person name="Grimmond S.M."/>
            <person name="Teasdale R.D."/>
            <person name="Liu E.T."/>
            <person name="Brusic V."/>
            <person name="Quackenbush J."/>
            <person name="Wahlestedt C."/>
            <person name="Mattick J.S."/>
            <person name="Hume D.A."/>
            <person name="Kai C."/>
            <person name="Sasaki D."/>
            <person name="Tomaru Y."/>
            <person name="Fukuda S."/>
            <person name="Kanamori-Katayama M."/>
            <person name="Suzuki M."/>
            <person name="Aoki J."/>
            <person name="Arakawa T."/>
            <person name="Iida J."/>
            <person name="Imamura K."/>
            <person name="Itoh M."/>
            <person name="Kato T."/>
            <person name="Kawaji H."/>
            <person name="Kawagashira N."/>
            <person name="Kawashima T."/>
            <person name="Kojima M."/>
            <person name="Kondo S."/>
            <person name="Konno H."/>
            <person name="Nakano K."/>
            <person name="Ninomiya N."/>
            <person name="Nishio T."/>
            <person name="Okada M."/>
            <person name="Plessy C."/>
            <person name="Shibata K."/>
            <person name="Shiraki T."/>
            <person name="Suzuki S."/>
            <person name="Tagami M."/>
            <person name="Waki K."/>
            <person name="Watahiki A."/>
            <person name="Okamura-Oho Y."/>
            <person name="Suzuki H."/>
            <person name="Kawai J."/>
            <person name="Hayashizaki Y."/>
        </authorList>
    </citation>
    <scope>NUCLEOTIDE SEQUENCE [LARGE SCALE MRNA]</scope>
    <source>
        <strain>C57BL/6J</strain>
        <strain>NOD</strain>
        <tissue>Dendritic cell</tissue>
        <tissue>Embryonic stomach</tissue>
    </source>
</reference>
<reference key="3">
    <citation type="journal article" date="2004" name="Genome Res.">
        <title>The status, quality, and expansion of the NIH full-length cDNA project: the Mammalian Gene Collection (MGC).</title>
        <authorList>
            <consortium name="The MGC Project Team"/>
        </authorList>
    </citation>
    <scope>NUCLEOTIDE SEQUENCE [LARGE SCALE MRNA]</scope>
    <source>
        <strain>FVB/N</strain>
        <tissue>Mammary tumor</tissue>
    </source>
</reference>
<reference key="4">
    <citation type="journal article" date="2004" name="J. Biol. Chem.">
        <title>Lysosomal phospholipase A2 is selectively expressed in alveolar macrophages.</title>
        <authorList>
            <person name="Abe A."/>
            <person name="Hiraoka M."/>
            <person name="Wild S."/>
            <person name="Wilcoxen S.E."/>
            <person name="Paine R."/>
            <person name="Shayman J.A."/>
        </authorList>
    </citation>
    <scope>FUNCTION</scope>
    <scope>CATALYTIC ACTIVITY</scope>
</reference>
<reference key="5">
    <citation type="journal article" date="2005" name="J. Lipid Res.">
        <title>Structure and function of lysosomal phospholipase A2: identification of the catalytic triad and the role of cysteine residues.</title>
        <authorList>
            <person name="Hiraoka M."/>
            <person name="Abe A."/>
            <person name="Shayman J.A."/>
        </authorList>
    </citation>
    <scope>FUNCTION</scope>
    <scope>CATALYTIC ACTIVITY</scope>
    <scope>ACTIVE SITE</scope>
    <scope>DISULFIDE BOND</scope>
    <scope>TISSUE SPECIFICITY</scope>
    <scope>MUTAGENESIS OF CYS-65; CYS-89; SER-198; ASP-360 AND HIS-392</scope>
</reference>
<reference key="6">
    <citation type="journal article" date="2006" name="J. Lipid Res.">
        <title>Positional specificity of lysosomal phospholipase A2.</title>
        <authorList>
            <person name="Abe A."/>
            <person name="Hiraoka M."/>
            <person name="Shayman J.A."/>
        </authorList>
    </citation>
    <scope>FUNCTION</scope>
    <scope>CATALYTIC ACTIVITY</scope>
    <scope>ACTIVITY REGULATION</scope>
</reference>
<reference key="7">
    <citation type="journal article" date="2006" name="Mol. Cell. Biol.">
        <title>Lysosomal phospholipase A2 and phospholipidosis.</title>
        <authorList>
            <person name="Hiraoka M."/>
            <person name="Abe A."/>
            <person name="Lu Y."/>
            <person name="Yang K."/>
            <person name="Han X."/>
            <person name="Gross R.W."/>
            <person name="Shayman J.A."/>
        </authorList>
    </citation>
    <scope>DISRUPTION PHENOTYPE</scope>
    <scope>FUNCTION</scope>
    <scope>CATALYTIC ACTIVITY</scope>
    <scope>TISSUE SPECIFICITY</scope>
</reference>
<reference key="8">
    <citation type="journal article" date="2007" name="J. Lipid Res.">
        <title>The acylation of lipophilic alcohols by lysosomal phospholipase A2.</title>
        <authorList>
            <person name="Abe A."/>
            <person name="Hiraoka M."/>
            <person name="Shayman J.A."/>
        </authorList>
    </citation>
    <scope>FUNCTION</scope>
    <scope>CATALYTIC ACTIVITY</scope>
</reference>
<reference key="9">
    <citation type="journal article" date="2008" name="J. Immunol.">
        <title>The secretion and uptake of lysosomal phospholipase A2 by alveolar macrophages.</title>
        <authorList>
            <person name="Abe A."/>
            <person name="Kelly R."/>
            <person name="Kollmeyer J."/>
            <person name="Hiraoka M."/>
            <person name="Lu Y."/>
            <person name="Shayman J.A."/>
        </authorList>
    </citation>
    <scope>SUBCELLULAR LOCATION</scope>
    <scope>FUNCTION</scope>
    <scope>CATALYTIC ACTIVITY</scope>
    <scope>TISSUE SPECIFICITY</scope>
</reference>
<reference key="10">
    <citation type="journal article" date="2010" name="Cell">
        <title>A tissue-specific atlas of mouse protein phosphorylation and expression.</title>
        <authorList>
            <person name="Huttlin E.L."/>
            <person name="Jedrychowski M.P."/>
            <person name="Elias J.E."/>
            <person name="Goswami T."/>
            <person name="Rad R."/>
            <person name="Beausoleil S.A."/>
            <person name="Villen J."/>
            <person name="Haas W."/>
            <person name="Sowa M.E."/>
            <person name="Gygi S.P."/>
        </authorList>
    </citation>
    <scope>IDENTIFICATION BY MASS SPECTROMETRY [LARGE SCALE ANALYSIS]</scope>
    <source>
        <tissue>Brain</tissue>
        <tissue>Liver</tissue>
        <tissue>Lung</tissue>
        <tissue>Spleen</tissue>
    </source>
</reference>
<reference key="11">
    <citation type="journal article" date="2010" name="J. Lipid Res.">
        <title>The measurement of lysosomal phospholipase A2 activity in plasma.</title>
        <authorList>
            <person name="Abe A."/>
            <person name="Kelly R."/>
            <person name="Shayman J.A."/>
        </authorList>
    </citation>
    <scope>SUBCELLULAR LOCATION</scope>
    <scope>TISSUE SPECIFICITY</scope>
    <scope>FUNCTION</scope>
    <scope>CATALYTIC ACTIVITY</scope>
    <scope>BIOPHYSICOCHEMICAL PROPERTIES</scope>
</reference>
<reference key="12">
    <citation type="journal article" date="2017" name="J. Lipid Res.">
        <title>Preferential hydrolysis of truncated oxidized glycerophospholipids by lysosomal phospholipase A2.</title>
        <authorList>
            <person name="Abe A."/>
            <person name="Hiraoka M."/>
            <person name="Ohguro H."/>
            <person name="Tesmer J.J."/>
            <person name="Shayman J.A."/>
        </authorList>
    </citation>
    <scope>FUNCTION</scope>
    <scope>ACTIVITY REGULATION</scope>
    <scope>CATALYTIC ACTIVITY</scope>
    <scope>BIOPHYSICOCHEMICAL PROPERTIES</scope>
</reference>
<organism>
    <name type="scientific">Mus musculus</name>
    <name type="common">Mouse</name>
    <dbReference type="NCBI Taxonomy" id="10090"/>
    <lineage>
        <taxon>Eukaryota</taxon>
        <taxon>Metazoa</taxon>
        <taxon>Chordata</taxon>
        <taxon>Craniata</taxon>
        <taxon>Vertebrata</taxon>
        <taxon>Euteleostomi</taxon>
        <taxon>Mammalia</taxon>
        <taxon>Eutheria</taxon>
        <taxon>Euarchontoglires</taxon>
        <taxon>Glires</taxon>
        <taxon>Rodentia</taxon>
        <taxon>Myomorpha</taxon>
        <taxon>Muroidea</taxon>
        <taxon>Muridae</taxon>
        <taxon>Murinae</taxon>
        <taxon>Mus</taxon>
        <taxon>Mus</taxon>
    </lineage>
</organism>